<name>MRE11_HUMAN</name>
<protein>
    <recommendedName>
        <fullName evidence="61">Double-strand break repair protein MRE11</fullName>
        <ecNumber evidence="33 37 42">3.1.-.-</ecNumber>
    </recommendedName>
    <alternativeName>
        <fullName evidence="60">Meiotic recombination 11 homolog 1</fullName>
        <shortName evidence="60">MRE11 homolog 1</shortName>
    </alternativeName>
    <alternativeName>
        <fullName>Meiotic recombination 11 homolog A</fullName>
        <shortName>MRE11 homolog A</shortName>
    </alternativeName>
</protein>
<reference key="1">
    <citation type="journal article" date="1995" name="Genomics">
        <title>Isolation and characterization of the human MRE11 homologue.</title>
        <authorList>
            <person name="Petrini J.H.J."/>
            <person name="Walsh M.E."/>
            <person name="Dimare C."/>
            <person name="Chen X.-N."/>
            <person name="Korenberg J.R."/>
            <person name="Weaver D.T."/>
        </authorList>
    </citation>
    <scope>NUCLEOTIDE SEQUENCE [MRNA] (ISOFORM 2)</scope>
</reference>
<reference key="2">
    <citation type="submission" date="1998-11" db="EMBL/GenBank/DDBJ databases">
        <authorList>
            <person name="Petrini J.H.J."/>
            <person name="Walsh M.E."/>
            <person name="Dimare C."/>
            <person name="Chen X.-N."/>
            <person name="Korenberg J.R."/>
            <person name="Weaver D.T."/>
        </authorList>
    </citation>
    <scope>SEQUENCE REVISION TO C-TERMINUS</scope>
</reference>
<reference key="3">
    <citation type="submission" date="1997-09" db="EMBL/GenBank/DDBJ databases">
        <title>Molecular cloning and functional characterization of hNGS1, a yeast and human MRE11 homolog.</title>
        <authorList>
            <person name="Chamankhah M."/>
            <person name="Wei Y."/>
            <person name="Xiao W."/>
        </authorList>
    </citation>
    <scope>NUCLEOTIDE SEQUENCE [MRNA] (ISOFORM 1)</scope>
</reference>
<reference key="4">
    <citation type="journal article" date="1998" name="Mol. Cell">
        <title>The 3' to 5' exonuclease activity of Mre 11 facilitates repair of DNA double-strand breaks.</title>
        <authorList>
            <person name="Paull T.T."/>
            <person name="Gellert M."/>
        </authorList>
    </citation>
    <scope>NUCLEOTIDE SEQUENCE [MRNA] (ISOFORM 1)</scope>
    <scope>FUNCTION</scope>
    <scope>INTERACTION WITH RAD50</scope>
</reference>
<reference key="5">
    <citation type="journal article" date="2001" name="Hum. Mol. Genet.">
        <title>hMRE11: genomic structure and a null mutation identified in a transcript protected from nonsense-mediated mRNA decay.</title>
        <authorList>
            <person name="Pitts S.A."/>
            <person name="Kullar H.S."/>
            <person name="Stankovic T."/>
            <person name="Stewart G.S."/>
            <person name="Last J.I.K."/>
            <person name="Bedenham T."/>
            <person name="Armstrong S.J."/>
            <person name="Piane M."/>
            <person name="Chessa L."/>
            <person name="Taylor A.M.R."/>
            <person name="Byrd P.J."/>
        </authorList>
    </citation>
    <scope>NUCLEOTIDE SEQUENCE [GENOMIC DNA] (ISOFORM 1)</scope>
    <scope>VARIANT ATLD1 572-ARG--ARG-708 DEL</scope>
</reference>
<reference key="6">
    <citation type="journal article" date="2004" name="Nat. Genet.">
        <title>Complete sequencing and characterization of 21,243 full-length human cDNAs.</title>
        <authorList>
            <person name="Ota T."/>
            <person name="Suzuki Y."/>
            <person name="Nishikawa T."/>
            <person name="Otsuki T."/>
            <person name="Sugiyama T."/>
            <person name="Irie R."/>
            <person name="Wakamatsu A."/>
            <person name="Hayashi K."/>
            <person name="Sato H."/>
            <person name="Nagai K."/>
            <person name="Kimura K."/>
            <person name="Makita H."/>
            <person name="Sekine M."/>
            <person name="Obayashi M."/>
            <person name="Nishi T."/>
            <person name="Shibahara T."/>
            <person name="Tanaka T."/>
            <person name="Ishii S."/>
            <person name="Yamamoto J."/>
            <person name="Saito K."/>
            <person name="Kawai Y."/>
            <person name="Isono Y."/>
            <person name="Nakamura Y."/>
            <person name="Nagahari K."/>
            <person name="Murakami K."/>
            <person name="Yasuda T."/>
            <person name="Iwayanagi T."/>
            <person name="Wagatsuma M."/>
            <person name="Shiratori A."/>
            <person name="Sudo H."/>
            <person name="Hosoiri T."/>
            <person name="Kaku Y."/>
            <person name="Kodaira H."/>
            <person name="Kondo H."/>
            <person name="Sugawara M."/>
            <person name="Takahashi M."/>
            <person name="Kanda K."/>
            <person name="Yokoi T."/>
            <person name="Furuya T."/>
            <person name="Kikkawa E."/>
            <person name="Omura Y."/>
            <person name="Abe K."/>
            <person name="Kamihara K."/>
            <person name="Katsuta N."/>
            <person name="Sato K."/>
            <person name="Tanikawa M."/>
            <person name="Yamazaki M."/>
            <person name="Ninomiya K."/>
            <person name="Ishibashi T."/>
            <person name="Yamashita H."/>
            <person name="Murakawa K."/>
            <person name="Fujimori K."/>
            <person name="Tanai H."/>
            <person name="Kimata M."/>
            <person name="Watanabe M."/>
            <person name="Hiraoka S."/>
            <person name="Chiba Y."/>
            <person name="Ishida S."/>
            <person name="Ono Y."/>
            <person name="Takiguchi S."/>
            <person name="Watanabe S."/>
            <person name="Yosida M."/>
            <person name="Hotuta T."/>
            <person name="Kusano J."/>
            <person name="Kanehori K."/>
            <person name="Takahashi-Fujii A."/>
            <person name="Hara H."/>
            <person name="Tanase T.-O."/>
            <person name="Nomura Y."/>
            <person name="Togiya S."/>
            <person name="Komai F."/>
            <person name="Hara R."/>
            <person name="Takeuchi K."/>
            <person name="Arita M."/>
            <person name="Imose N."/>
            <person name="Musashino K."/>
            <person name="Yuuki H."/>
            <person name="Oshima A."/>
            <person name="Sasaki N."/>
            <person name="Aotsuka S."/>
            <person name="Yoshikawa Y."/>
            <person name="Matsunawa H."/>
            <person name="Ichihara T."/>
            <person name="Shiohata N."/>
            <person name="Sano S."/>
            <person name="Moriya S."/>
            <person name="Momiyama H."/>
            <person name="Satoh N."/>
            <person name="Takami S."/>
            <person name="Terashima Y."/>
            <person name="Suzuki O."/>
            <person name="Nakagawa S."/>
            <person name="Senoh A."/>
            <person name="Mizoguchi H."/>
            <person name="Goto Y."/>
            <person name="Shimizu F."/>
            <person name="Wakebe H."/>
            <person name="Hishigaki H."/>
            <person name="Watanabe T."/>
            <person name="Sugiyama A."/>
            <person name="Takemoto M."/>
            <person name="Kawakami B."/>
            <person name="Yamazaki M."/>
            <person name="Watanabe K."/>
            <person name="Kumagai A."/>
            <person name="Itakura S."/>
            <person name="Fukuzumi Y."/>
            <person name="Fujimori Y."/>
            <person name="Komiyama M."/>
            <person name="Tashiro H."/>
            <person name="Tanigami A."/>
            <person name="Fujiwara T."/>
            <person name="Ono T."/>
            <person name="Yamada K."/>
            <person name="Fujii Y."/>
            <person name="Ozaki K."/>
            <person name="Hirao M."/>
            <person name="Ohmori Y."/>
            <person name="Kawabata A."/>
            <person name="Hikiji T."/>
            <person name="Kobatake N."/>
            <person name="Inagaki H."/>
            <person name="Ikema Y."/>
            <person name="Okamoto S."/>
            <person name="Okitani R."/>
            <person name="Kawakami T."/>
            <person name="Noguchi S."/>
            <person name="Itoh T."/>
            <person name="Shigeta K."/>
            <person name="Senba T."/>
            <person name="Matsumura K."/>
            <person name="Nakajima Y."/>
            <person name="Mizuno T."/>
            <person name="Morinaga M."/>
            <person name="Sasaki M."/>
            <person name="Togashi T."/>
            <person name="Oyama M."/>
            <person name="Hata H."/>
            <person name="Watanabe M."/>
            <person name="Komatsu T."/>
            <person name="Mizushima-Sugano J."/>
            <person name="Satoh T."/>
            <person name="Shirai Y."/>
            <person name="Takahashi Y."/>
            <person name="Nakagawa K."/>
            <person name="Okumura K."/>
            <person name="Nagase T."/>
            <person name="Nomura N."/>
            <person name="Kikuchi H."/>
            <person name="Masuho Y."/>
            <person name="Yamashita R."/>
            <person name="Nakai K."/>
            <person name="Yada T."/>
            <person name="Nakamura Y."/>
            <person name="Ohara O."/>
            <person name="Isogai T."/>
            <person name="Sugano S."/>
        </authorList>
    </citation>
    <scope>NUCLEOTIDE SEQUENCE [LARGE SCALE MRNA] (ISOFORM 3)</scope>
    <source>
        <tissue>Tongue</tissue>
    </source>
</reference>
<reference key="7">
    <citation type="submission" date="2004-03" db="EMBL/GenBank/DDBJ databases">
        <authorList>
            <consortium name="NIEHS SNPs program"/>
        </authorList>
    </citation>
    <scope>NUCLEOTIDE SEQUENCE [GENOMIC DNA]</scope>
    <scope>VARIANTS GLY-468 AND VAL-698</scope>
</reference>
<reference key="8">
    <citation type="journal article" date="2006" name="Nature">
        <title>Human chromosome 11 DNA sequence and analysis including novel gene identification.</title>
        <authorList>
            <person name="Taylor T.D."/>
            <person name="Noguchi H."/>
            <person name="Totoki Y."/>
            <person name="Toyoda A."/>
            <person name="Kuroki Y."/>
            <person name="Dewar K."/>
            <person name="Lloyd C."/>
            <person name="Itoh T."/>
            <person name="Takeda T."/>
            <person name="Kim D.-W."/>
            <person name="She X."/>
            <person name="Barlow K.F."/>
            <person name="Bloom T."/>
            <person name="Bruford E."/>
            <person name="Chang J.L."/>
            <person name="Cuomo C.A."/>
            <person name="Eichler E."/>
            <person name="FitzGerald M.G."/>
            <person name="Jaffe D.B."/>
            <person name="LaButti K."/>
            <person name="Nicol R."/>
            <person name="Park H.-S."/>
            <person name="Seaman C."/>
            <person name="Sougnez C."/>
            <person name="Yang X."/>
            <person name="Zimmer A.R."/>
            <person name="Zody M.C."/>
            <person name="Birren B.W."/>
            <person name="Nusbaum C."/>
            <person name="Fujiyama A."/>
            <person name="Hattori M."/>
            <person name="Rogers J."/>
            <person name="Lander E.S."/>
            <person name="Sakaki Y."/>
        </authorList>
    </citation>
    <scope>NUCLEOTIDE SEQUENCE [LARGE SCALE GENOMIC DNA]</scope>
</reference>
<reference key="9">
    <citation type="journal article" date="2004" name="Genome Res.">
        <title>The status, quality, and expansion of the NIH full-length cDNA project: the Mammalian Gene Collection (MGC).</title>
        <authorList>
            <consortium name="The MGC Project Team"/>
        </authorList>
    </citation>
    <scope>NUCLEOTIDE SEQUENCE [LARGE SCALE MRNA] (ISOFORM 1)</scope>
    <source>
        <tissue>Brain</tissue>
    </source>
</reference>
<reference key="10">
    <citation type="journal article" date="1998" name="Cell">
        <title>The hMre11/hRad50 protein complex and Nijmegen breakage syndrome: linkage of double-strand break repair to the cellular DNA damage response.</title>
        <authorList>
            <person name="Carney J.P."/>
            <person name="Maser R.S."/>
            <person name="Olivares H."/>
            <person name="Davis E.M."/>
            <person name="Le Beau M."/>
            <person name="Yates J.R. III"/>
            <person name="Hays L."/>
            <person name="Morgan W.F."/>
            <person name="Petrini J.H.J."/>
        </authorList>
    </citation>
    <scope>FUNCTION IN DSB REPAIR</scope>
    <scope>IDENTIFICATION IN THE MRN COMPLEX WITH RAD50 AND NBN</scope>
</reference>
<reference key="11">
    <citation type="journal article" date="1998" name="J. Biol. Chem.">
        <title>Nuclease activities in a complex of human recombination and DNA repair factors Rad50, Mre11, and p95.</title>
        <authorList>
            <person name="Trujillo K.M."/>
            <person name="Yuan S.-S.F."/>
            <person name="Lee E.Y.-H.P."/>
            <person name="Sung P."/>
        </authorList>
    </citation>
    <scope>FUNCTION IN DSB REPAIR</scope>
    <scope>IDENTIFICATION IN THE MRN COMPLEX WITH RAD50 AND NBN</scope>
</reference>
<reference key="12">
    <citation type="journal article" date="2000" name="Genes Dev.">
        <title>BASC, a super complex of BRCA1-associated proteins involved in the recognition and repair of aberrant DNA structures.</title>
        <authorList>
            <person name="Wang Y."/>
            <person name="Cortez D."/>
            <person name="Yazdi P."/>
            <person name="Neff N."/>
            <person name="Elledge S.J."/>
            <person name="Qin J."/>
        </authorList>
    </citation>
    <scope>SUBCELLULAR LOCATION</scope>
    <scope>IDENTIFICATION IN THE BASC COMPLEX WITH BRCA1; MSH2; MSH6; MLH1; ATM; BLM; RAD50 AND NBN</scope>
</reference>
<reference key="13">
    <citation type="journal article" date="2000" name="Nature">
        <title>Functional link between ataxia-telangiectasia and Nijmegen breakage syndrome gene products.</title>
        <authorList>
            <person name="Zhao S."/>
            <person name="Weng Y.-C."/>
            <person name="Yuan S.-S.F."/>
            <person name="Lin Y.-T."/>
            <person name="Hsu H.-C."/>
            <person name="Lin S.-C."/>
            <person name="Gerbino E."/>
            <person name="Song M.-H."/>
            <person name="Zdzienicka M.Z."/>
            <person name="Gatti R.A."/>
            <person name="Shay J.W."/>
            <person name="Ziv Y."/>
            <person name="Shiloh Y."/>
            <person name="Lee E.Y.-H.P."/>
        </authorList>
    </citation>
    <scope>IDENTIFICATION IN THE MRN COMPLEX WITH RAD50 AND NBN</scope>
</reference>
<reference key="14">
    <citation type="journal article" date="2000" name="Nat. Genet.">
        <title>Cell-cycle-regulated association of RAD50/MRE11/NBS1 with TRF2 and human telomeres.</title>
        <authorList>
            <person name="Zhu X.-D."/>
            <person name="Kuester B."/>
            <person name="Mann M."/>
            <person name="Petrini J.H.J."/>
            <person name="de Lange T."/>
        </authorList>
    </citation>
    <scope>FUNCTION IN TELOMERES</scope>
    <scope>IDENTIFICATION BY MASS SPECTROMETRY</scope>
    <scope>IDENTIFICATION IN THE A COMPLEX WITH TERF2</scope>
    <scope>SUBCELLULAR LOCATION</scope>
</reference>
<reference key="15">
    <citation type="journal article" date="2001" name="Mol. Cell">
        <title>Human Rad50/Mre11 is a flexible complex that can tether DNA ends.</title>
        <authorList>
            <person name="de Jager M."/>
            <person name="van Noort J."/>
            <person name="van Gent D.C."/>
            <person name="Dekker C."/>
            <person name="Kanaar R."/>
            <person name="Wyman C."/>
        </authorList>
    </citation>
    <scope>FUNCTION</scope>
</reference>
<reference key="16">
    <citation type="journal article" date="2002" name="Nature">
        <title>Adenovirus oncoproteins inactivate the Mre11-Rad50-NBS1 DNA repair complex.</title>
        <authorList>
            <person name="Stracker T.H."/>
            <person name="Carson C.T."/>
            <person name="Weitzman M.D."/>
        </authorList>
    </citation>
    <scope>INACTIVATION BY ADENOVIRUS ONCOPROTEINS</scope>
</reference>
<reference key="17">
    <citation type="journal article" date="2003" name="EMBO J.">
        <title>The Mre11 complex is required for ATM activation and the G2/M checkpoint.</title>
        <authorList>
            <person name="Carson C.T."/>
            <person name="Schwartz R.A."/>
            <person name="Stracker T.H."/>
            <person name="Lilley C.E."/>
            <person name="Lee D.V."/>
            <person name="Weitzman M.D."/>
        </authorList>
    </citation>
    <scope>FUNCTION</scope>
    <scope>UBIQUITINATION (MICROBIAL INFECTION)</scope>
</reference>
<reference key="18">
    <citation type="journal article" date="2004" name="Mol. Cell. Biol.">
        <title>Artemis is a phosphorylation target of ATM and ATR and is involved in the G2/M DNA damage checkpoint response.</title>
        <authorList>
            <person name="Zhang X."/>
            <person name="Succi J."/>
            <person name="Feng Z."/>
            <person name="Prithivirajsingh S."/>
            <person name="Story M.D."/>
            <person name="Legerski R.J."/>
        </authorList>
    </citation>
    <scope>INTERACTION WITH DCLRE1C</scope>
</reference>
<reference key="19">
    <citation type="journal article" date="2004" name="Science">
        <title>Direct activation of the ATM protein kinase by the Mre11/Rad50/Nbs1 complex.</title>
        <authorList>
            <person name="Lee J.-H."/>
            <person name="Paull T.T."/>
        </authorList>
    </citation>
    <scope>FUNCTION IN ATM ACTIVATION</scope>
</reference>
<reference key="20">
    <citation type="journal article" date="2005" name="Cancer Sci.">
        <title>Ataxia-telangiectasia-mutated dependent phosphorylation of Artemis in response to DNA damage.</title>
        <authorList>
            <person name="Chen L."/>
            <person name="Morio T."/>
            <person name="Minegishi Y."/>
            <person name="Nakada S."/>
            <person name="Nagasawa M."/>
            <person name="Komatsu K."/>
            <person name="Chessa L."/>
            <person name="Villa A."/>
            <person name="Lecis D."/>
            <person name="Delia D."/>
            <person name="Mizutani S."/>
        </authorList>
    </citation>
    <scope>INTERACTION WITH DCLRE1C</scope>
</reference>
<reference key="21">
    <citation type="journal article" date="2005" name="Genes Dev.">
        <title>Arginine methylation of MRE11 by PRMT1 is required for DNA damage checkpoint control.</title>
        <authorList>
            <person name="Boisvert F.M."/>
            <person name="Dery U."/>
            <person name="Masson J.Y."/>
            <person name="Richard S."/>
        </authorList>
    </citation>
    <scope>METHYLATION AT ARG-570; ARG-572; ARG-574; ARG-576; ARG-577; ARG-580; ARG-587; ARG-592 AND ARG-594</scope>
    <scope>MUTAGENESIS OF 570-ARG--ARG-594</scope>
</reference>
<reference key="22">
    <citation type="journal article" date="2005" name="Mol. Cell">
        <title>ATM-dependent phosphorylation of ATF2 is required for the DNA damage response.</title>
        <authorList>
            <person name="Bhoumik A."/>
            <person name="Takahashi S."/>
            <person name="Breitweiser W."/>
            <person name="Shiloh Y."/>
            <person name="Jones N."/>
            <person name="Ronai Z."/>
        </authorList>
    </citation>
    <scope>INTERACTION WITH ATF2</scope>
    <scope>SUBCELLULAR LOCATION</scope>
</reference>
<reference key="23">
    <citation type="journal article" date="2005" name="Science">
        <title>ATM activation by DNA double-strand breaks through the Mre11-Rad50-Nbs1 complex.</title>
        <authorList>
            <person name="Lee J.H."/>
            <person name="Paull T.T."/>
        </authorList>
    </citation>
    <scope>FUNCTION IN ATM ACTIVATION</scope>
</reference>
<reference key="24">
    <citation type="journal article" date="2006" name="Cell">
        <title>Global, in vivo, and site-specific phosphorylation dynamics in signaling networks.</title>
        <authorList>
            <person name="Olsen J.V."/>
            <person name="Blagoev B."/>
            <person name="Gnad F."/>
            <person name="Macek B."/>
            <person name="Kumar C."/>
            <person name="Mortensen P."/>
            <person name="Mann M."/>
        </authorList>
    </citation>
    <scope>IDENTIFICATION BY MASS SPECTROMETRY [LARGE SCALE ANALYSIS]</scope>
    <source>
        <tissue>Cervix carcinoma</tissue>
    </source>
</reference>
<reference key="25">
    <citation type="journal article" date="2006" name="EMBO J.">
        <title>ATM and ATR promote Mre11 dependent restart of collapsed replication forks and prevent accumulation of DNA breaks.</title>
        <authorList>
            <person name="Trenz K."/>
            <person name="Smith E."/>
            <person name="Smith S."/>
            <person name="Costanzo V."/>
        </authorList>
    </citation>
    <scope>PHOSPHORYLATION</scope>
</reference>
<reference key="26">
    <citation type="journal article" date="2006" name="Nat. Struct. Mol. Biol.">
        <title>Two-step activation of ATM by DNA and the Mre11-Rad50-Nbs1 complex.</title>
        <authorList>
            <person name="Dupre A."/>
            <person name="Boyer-Chatenet L."/>
            <person name="Gautier J."/>
        </authorList>
    </citation>
    <scope>FUNCTION IN ATM ACTIVATION</scope>
</reference>
<reference key="27">
    <citation type="journal article" date="2008" name="Mol. Cell">
        <title>Kinase-selective enrichment enables quantitative phosphoproteomics of the kinome across the cell cycle.</title>
        <authorList>
            <person name="Daub H."/>
            <person name="Olsen J.V."/>
            <person name="Bairlein M."/>
            <person name="Gnad F."/>
            <person name="Oppermann F.S."/>
            <person name="Korner R."/>
            <person name="Greff Z."/>
            <person name="Keri G."/>
            <person name="Stemmann O."/>
            <person name="Mann M."/>
        </authorList>
    </citation>
    <scope>IDENTIFICATION BY MASS SPECTROMETRY [LARGE SCALE ANALYSIS]</scope>
    <source>
        <tissue>Cervix carcinoma</tissue>
    </source>
</reference>
<reference key="28">
    <citation type="journal article" date="2008" name="Oncogene">
        <title>Snm1B/Apollo mediates replication fork collapse and S Phase checkpoint activation in response to DNA interstrand cross-links.</title>
        <authorList>
            <person name="Bae J.B."/>
            <person name="Mukhopadhyay S.S."/>
            <person name="Liu L."/>
            <person name="Zhang N."/>
            <person name="Tan J."/>
            <person name="Akhter S."/>
            <person name="Liu X."/>
            <person name="Shen X."/>
            <person name="Li L."/>
            <person name="Legerski R.J."/>
        </authorList>
    </citation>
    <scope>INTERACTION WITH DCLRE1B</scope>
</reference>
<reference key="29">
    <citation type="journal article" date="2008" name="Proc. Natl. Acad. Sci. U.S.A.">
        <title>A quantitative atlas of mitotic phosphorylation.</title>
        <authorList>
            <person name="Dephoure N."/>
            <person name="Zhou C."/>
            <person name="Villen J."/>
            <person name="Beausoleil S.A."/>
            <person name="Bakalarski C.E."/>
            <person name="Elledge S.J."/>
            <person name="Gygi S.P."/>
        </authorList>
    </citation>
    <scope>PHOSPHORYLATION [LARGE SCALE ANALYSIS] AT SER-649; SER-688; SER-689 AND SER-701</scope>
    <scope>IDENTIFICATION BY MASS SPECTROMETRY [LARGE SCALE ANALYSIS]</scope>
    <source>
        <tissue>Cervix carcinoma</tissue>
    </source>
</reference>
<reference key="30">
    <citation type="journal article" date="2009" name="Anal. Chem.">
        <title>Lys-N and trypsin cover complementary parts of the phosphoproteome in a refined SCX-based approach.</title>
        <authorList>
            <person name="Gauci S."/>
            <person name="Helbig A.O."/>
            <person name="Slijper M."/>
            <person name="Krijgsveld J."/>
            <person name="Heck A.J."/>
            <person name="Mohammed S."/>
        </authorList>
    </citation>
    <scope>ACETYLATION [LARGE SCALE ANALYSIS] AT SER-2</scope>
    <scope>CLEAVAGE OF INITIATOR METHIONINE [LARGE SCALE ANALYSIS]</scope>
    <scope>IDENTIFICATION BY MASS SPECTROMETRY [LARGE SCALE ANALYSIS]</scope>
</reference>
<reference key="31">
    <citation type="journal article" date="2009" name="Sci. Signal.">
        <title>Quantitative phosphoproteomic analysis of T cell receptor signaling reveals system-wide modulation of protein-protein interactions.</title>
        <authorList>
            <person name="Mayya V."/>
            <person name="Lundgren D.H."/>
            <person name="Hwang S.-I."/>
            <person name="Rezaul K."/>
            <person name="Wu L."/>
            <person name="Eng J.K."/>
            <person name="Rodionov V."/>
            <person name="Han D.K."/>
        </authorList>
    </citation>
    <scope>PHOSPHORYLATION [LARGE SCALE ANALYSIS] AT SER-649; SER-688 AND SER-689</scope>
    <scope>IDENTIFICATION BY MASS SPECTROMETRY [LARGE SCALE ANALYSIS]</scope>
    <source>
        <tissue>Leukemic T-cell</tissue>
    </source>
</reference>
<reference key="32">
    <citation type="journal article" date="2010" name="J. Virol.">
        <title>Physical interaction between the herpes simplex virus type 1 exonuclease, UL12, and the DNA double-strand break-sensing MRN complex.</title>
        <authorList>
            <person name="Balasubramanian N."/>
            <person name="Bai P."/>
            <person name="Buchek G."/>
            <person name="Korza G."/>
            <person name="Weller S.K."/>
        </authorList>
    </citation>
    <scope>INTERACTION WITH HERPES SIMPLEX VIRUS 1 UL12</scope>
</reference>
<reference key="33">
    <citation type="journal article" date="2010" name="Sci. Signal.">
        <title>Quantitative phosphoproteomics reveals widespread full phosphorylation site occupancy during mitosis.</title>
        <authorList>
            <person name="Olsen J.V."/>
            <person name="Vermeulen M."/>
            <person name="Santamaria A."/>
            <person name="Kumar C."/>
            <person name="Miller M.L."/>
            <person name="Jensen L.J."/>
            <person name="Gnad F."/>
            <person name="Cox J."/>
            <person name="Jensen T.S."/>
            <person name="Nigg E.A."/>
            <person name="Brunak S."/>
            <person name="Mann M."/>
        </authorList>
    </citation>
    <scope>PHOSPHORYLATION [LARGE SCALE ANALYSIS] AT SER-688 AND SER-689</scope>
    <scope>IDENTIFICATION BY MASS SPECTROMETRY [LARGE SCALE ANALYSIS]</scope>
    <source>
        <tissue>Cervix carcinoma</tissue>
    </source>
</reference>
<reference key="34">
    <citation type="journal article" date="2011" name="BMC Syst. Biol.">
        <title>Initial characterization of the human central proteome.</title>
        <authorList>
            <person name="Burkard T.R."/>
            <person name="Planyavsky M."/>
            <person name="Kaupe I."/>
            <person name="Breitwieser F.P."/>
            <person name="Buerckstuemmer T."/>
            <person name="Bennett K.L."/>
            <person name="Superti-Furga G."/>
            <person name="Colinge J."/>
        </authorList>
    </citation>
    <scope>IDENTIFICATION BY MASS SPECTROMETRY [LARGE SCALE ANALYSIS]</scope>
</reference>
<reference key="35">
    <citation type="journal article" date="2011" name="Sci. Signal.">
        <title>System-wide temporal characterization of the proteome and phosphoproteome of human embryonic stem cell differentiation.</title>
        <authorList>
            <person name="Rigbolt K.T."/>
            <person name="Prokhorova T.A."/>
            <person name="Akimov V."/>
            <person name="Henningsen J."/>
            <person name="Johansen P.T."/>
            <person name="Kratchmarova I."/>
            <person name="Kassem M."/>
            <person name="Mann M."/>
            <person name="Olsen J.V."/>
            <person name="Blagoev B."/>
        </authorList>
    </citation>
    <scope>PHOSPHORYLATION [LARGE SCALE ANALYSIS] AT SER-688 AND SER-689</scope>
    <scope>IDENTIFICATION BY MASS SPECTROMETRY [LARGE SCALE ANALYSIS]</scope>
</reference>
<reference key="36">
    <citation type="journal article" date="2012" name="Cell">
        <title>Exome capture reveals ZNF423 and CEP164 mutations, linking renal ciliopathies to DNA damage response signaling.</title>
        <authorList>
            <person name="Chaki M."/>
            <person name="Airik R."/>
            <person name="Ghosh A.K."/>
            <person name="Giles R.H."/>
            <person name="Chen R."/>
            <person name="Slaats G.G."/>
            <person name="Wang H."/>
            <person name="Hurd T.W."/>
            <person name="Zhou W."/>
            <person name="Cluckey A."/>
            <person name="Gee H.Y."/>
            <person name="Ramaswami G."/>
            <person name="Hong C.J."/>
            <person name="Hamilton B.A."/>
            <person name="Cervenka I."/>
            <person name="Ganji R.S."/>
            <person name="Bryja V."/>
            <person name="Arts H.H."/>
            <person name="van Reeuwijk J."/>
            <person name="Oud M.M."/>
            <person name="Letteboer S.J."/>
            <person name="Roepman R."/>
            <person name="Husson H."/>
            <person name="Ibraghimov-Beskrovnaya O."/>
            <person name="Yasunaga T."/>
            <person name="Walz G."/>
            <person name="Eley L."/>
            <person name="Sayer J.A."/>
            <person name="Schermer B."/>
            <person name="Liebau M.C."/>
            <person name="Benzing T."/>
            <person name="Le Corre S."/>
            <person name="Drummond I."/>
            <person name="Janssen S."/>
            <person name="Allen S.J."/>
            <person name="Natarajan S."/>
            <person name="O'Toole J.F."/>
            <person name="Attanasio M."/>
            <person name="Saunier S."/>
            <person name="Antignac C."/>
            <person name="Koenekoop R.K."/>
            <person name="Ren H."/>
            <person name="Lopez I."/>
            <person name="Nayir A."/>
            <person name="Stoetzel C."/>
            <person name="Dollfus H."/>
            <person name="Massoudi R."/>
            <person name="Gleeson J.G."/>
            <person name="Andreoli S.P."/>
            <person name="Doherty D.G."/>
            <person name="Lindstrad A."/>
            <person name="Golzio C."/>
            <person name="Katsanis N."/>
            <person name="Pape L."/>
            <person name="Abboud E.B."/>
            <person name="Al-Rajhi A.A."/>
            <person name="Lewis R.A."/>
            <person name="Omran H."/>
            <person name="Lee E.Y."/>
            <person name="Wang S."/>
            <person name="Sekiguchi J.M."/>
            <person name="Saunders R."/>
            <person name="Johnson C.A."/>
            <person name="Garner E."/>
            <person name="Vanselow K."/>
            <person name="Andersen J.S."/>
            <person name="Shlomai J."/>
            <person name="Nurnberg G."/>
            <person name="Nurnberg P."/>
            <person name="Levy S."/>
            <person name="Smogorzewska A."/>
            <person name="Otto E.A."/>
            <person name="Hildebrandt F."/>
        </authorList>
    </citation>
    <scope>INVOLVEMENT IN NPHP-RC</scope>
</reference>
<reference key="37">
    <citation type="journal article" date="2012" name="Mol. Cell. Proteomics">
        <title>Comparative large-scale characterisation of plant vs. mammal proteins reveals similar and idiosyncratic N-alpha acetylation features.</title>
        <authorList>
            <person name="Bienvenut W.V."/>
            <person name="Sumpton D."/>
            <person name="Martinez A."/>
            <person name="Lilla S."/>
            <person name="Espagne C."/>
            <person name="Meinnel T."/>
            <person name="Giglione C."/>
        </authorList>
    </citation>
    <scope>ACETYLATION [LARGE SCALE ANALYSIS] AT SER-2</scope>
    <scope>CLEAVAGE OF INITIATOR METHIONINE [LARGE SCALE ANALYSIS]</scope>
    <scope>IDENTIFICATION BY MASS SPECTROMETRY [LARGE SCALE ANALYSIS]</scope>
</reference>
<reference key="38">
    <citation type="journal article" date="2013" name="J. Proteome Res.">
        <title>Toward a comprehensive characterization of a human cancer cell phosphoproteome.</title>
        <authorList>
            <person name="Zhou H."/>
            <person name="Di Palma S."/>
            <person name="Preisinger C."/>
            <person name="Peng M."/>
            <person name="Polat A.N."/>
            <person name="Heck A.J."/>
            <person name="Mohammed S."/>
        </authorList>
    </citation>
    <scope>PHOSPHORYLATION [LARGE SCALE ANALYSIS] AT SER-275; SER-619; SER-678; SER-688 AND SER-689</scope>
    <scope>IDENTIFICATION BY MASS SPECTROMETRY [LARGE SCALE ANALYSIS]</scope>
    <source>
        <tissue>Erythroleukemia</tissue>
    </source>
</reference>
<reference key="39">
    <citation type="journal article" date="2014" name="J. Proteomics">
        <title>An enzyme assisted RP-RPLC approach for in-depth analysis of human liver phosphoproteome.</title>
        <authorList>
            <person name="Bian Y."/>
            <person name="Song C."/>
            <person name="Cheng K."/>
            <person name="Dong M."/>
            <person name="Wang F."/>
            <person name="Huang J."/>
            <person name="Sun D."/>
            <person name="Wang L."/>
            <person name="Ye M."/>
            <person name="Zou H."/>
        </authorList>
    </citation>
    <scope>PHOSPHORYLATION [LARGE SCALE ANALYSIS] AT SER-649; SER-688 AND SER-689</scope>
    <scope>IDENTIFICATION BY MASS SPECTROMETRY [LARGE SCALE ANALYSIS]</scope>
    <source>
        <tissue>Liver</tissue>
    </source>
</reference>
<reference key="40">
    <citation type="journal article" date="2014" name="Mol. Cell">
        <title>DNA double-strand break repair pathway choice is directed by distinct MRE11 nuclease activities.</title>
        <authorList>
            <person name="Shibata A."/>
            <person name="Moiani D."/>
            <person name="Arvai A.S."/>
            <person name="Perry J."/>
            <person name="Harding S.M."/>
            <person name="Genois M.M."/>
            <person name="Maity R."/>
            <person name="van Rossum-Fikkert S."/>
            <person name="Kertokalio A."/>
            <person name="Romoli F."/>
            <person name="Ismail A."/>
            <person name="Ismalaj E."/>
            <person name="Petricci E."/>
            <person name="Neale M.J."/>
            <person name="Bristow R.G."/>
            <person name="Masson J.Y."/>
            <person name="Wyman C."/>
            <person name="Jeggo P.A."/>
            <person name="Tainer J.A."/>
        </authorList>
    </citation>
    <scope>FUNCTION</scope>
    <scope>ACTIVITY REGULATION</scope>
</reference>
<reference key="41">
    <citation type="journal article" date="2015" name="Nat. Commun.">
        <title>MCM8-9 complex promotes resection of double-strand break ends by MRE11-RAD50-NBS1 complex.</title>
        <authorList>
            <person name="Lee K.Y."/>
            <person name="Im J.S."/>
            <person name="Shibata E."/>
            <person name="Park J."/>
            <person name="Handa N."/>
            <person name="Kowalczykowski S.C."/>
            <person name="Dutta A."/>
        </authorList>
    </citation>
    <scope>IDENTIFICATION IN THE MRN COMPLEX</scope>
    <scope>INTERACTION WITH MCM9</scope>
    <scope>SUBCELLULAR LOCATION</scope>
</reference>
<reference key="42">
    <citation type="journal article" date="2015" name="Nucleic Acids Res.">
        <title>ATM-dependent phosphorylation of MRE11 controls extent of resection during homology directed repair by signalling through Exonuclease 1.</title>
        <authorList>
            <person name="Kijas A.W."/>
            <person name="Lim Y.C."/>
            <person name="Bolderson E."/>
            <person name="Cerosaletti K."/>
            <person name="Gatei M."/>
            <person name="Jakob B."/>
            <person name="Tobias F."/>
            <person name="Taucher-Scholz G."/>
            <person name="Gueven N."/>
            <person name="Oakley G."/>
            <person name="Concannon P."/>
            <person name="Wolvetang E."/>
            <person name="Khanna K.K."/>
            <person name="Wiesmueller L."/>
            <person name="Lavin M.F."/>
        </authorList>
    </citation>
    <scope>FUNCTION</scope>
    <scope>SUBCELLULAR LOCATION</scope>
    <scope>PHOSPHORYLATION AT SER-676 AND SER-678</scope>
    <scope>MUTAGENESIS OF SER-531; SER-590 AND 676-SER--SER-678</scope>
</reference>
<reference key="43">
    <citation type="journal article" date="2016" name="Cell Rep.">
        <title>MRNIP/C5orf45 interacts with the MRN complex and contributes to the DNA damage response.</title>
        <authorList>
            <person name="Staples C.J."/>
            <person name="Barone G."/>
            <person name="Myers K.N."/>
            <person name="Ganesh A."/>
            <person name="Gibbs-Seymour I."/>
            <person name="Patil A.A."/>
            <person name="Beveridge R.D."/>
            <person name="Daye C."/>
            <person name="Beniston R."/>
            <person name="Maslen S."/>
            <person name="Ahel I."/>
            <person name="Skehel J.M."/>
            <person name="Collis S.J."/>
        </authorList>
    </citation>
    <scope>INTERACTION WITH MRNIP</scope>
</reference>
<reference key="44">
    <citation type="journal article" date="2016" name="Mol. Cell">
        <title>Nbs1 converts the human Mre11/Rad50 nuclease complex into an endo/exonuclease machine specific for protein-DNA adducts.</title>
        <authorList>
            <person name="Deshpande R.A."/>
            <person name="Lee J.H."/>
            <person name="Arora S."/>
            <person name="Paull T.T."/>
        </authorList>
    </citation>
    <scope>FUNCTION</scope>
    <scope>ACTIVITY REGULATION</scope>
</reference>
<reference key="45">
    <citation type="journal article" date="2016" name="Mol. Cell">
        <title>Phosphorylated CtIP functions as a co-factor of the MRE11-RAD50-NBS1 endonuclease in DNA end resection.</title>
        <authorList>
            <person name="Anand R."/>
            <person name="Ranjha L."/>
            <person name="Cannavo E."/>
            <person name="Cejka P."/>
        </authorList>
    </citation>
    <scope>FUNCTION</scope>
    <scope>ACTIVITY REGULATION</scope>
    <scope>MUTAGENESIS OF 129-HIS-ASP-130</scope>
</reference>
<reference key="46">
    <citation type="journal article" date="2016" name="Nat. Cell Biol.">
        <title>EXD2 promotes homologous recombination by facilitating DNA end resection.</title>
        <authorList>
            <person name="Broderick R."/>
            <person name="Nieminuszczy J."/>
            <person name="Baddock H.T."/>
            <person name="Deshpande R.A."/>
            <person name="Gileadi O."/>
            <person name="Paull T.T."/>
            <person name="McHugh P.J."/>
            <person name="Niedzwiedz W."/>
        </authorList>
    </citation>
    <scope>FUNCTION</scope>
    <scope>INTERACTION WITH EXD2</scope>
</reference>
<reference key="47">
    <citation type="journal article" date="2017" name="Cancer Res.">
        <title>Plk1 Phosphorylation of Mre11 Antagonizes the DNA Damage Response.</title>
        <authorList>
            <person name="Li Z."/>
            <person name="Li J."/>
            <person name="Kong Y."/>
            <person name="Yan S."/>
            <person name="Ahmad N."/>
            <person name="Liu X."/>
        </authorList>
    </citation>
    <scope>PHOSPHORYLATION AT SER-649 AND SER-688</scope>
    <scope>SUBCELLULAR LOCATION</scope>
    <scope>MUTAGENESIS OF SER-649 AND SER-688</scope>
</reference>
<reference key="48">
    <citation type="journal article" date="2017" name="Cell Rep.">
        <title>SAMHD1 promotes DNA end resection to facilitate DNA repair by homologous recombination.</title>
        <authorList>
            <person name="Daddacha W."/>
            <person name="Koyen A.E."/>
            <person name="Bastien A.J."/>
            <person name="Head P.E."/>
            <person name="Dhere V.R."/>
            <person name="Nabeta G.N."/>
            <person name="Connolly E.C."/>
            <person name="Werner E."/>
            <person name="Madden M.Z."/>
            <person name="Daly M.B."/>
            <person name="Minten E.V."/>
            <person name="Whelan D.R."/>
            <person name="Schlafstein A.J."/>
            <person name="Zhang H."/>
            <person name="Anand R."/>
            <person name="Doronio C."/>
            <person name="Withers A.E."/>
            <person name="Shepard C."/>
            <person name="Sundaram R.K."/>
            <person name="Deng X."/>
            <person name="Dynan W.S."/>
            <person name="Wang Y."/>
            <person name="Bindra R.S."/>
            <person name="Cejka P."/>
            <person name="Rothenberg E."/>
            <person name="Doetsch P.W."/>
            <person name="Kim B."/>
            <person name="Yu D.S."/>
        </authorList>
    </citation>
    <scope>INTERACTION WITH SAMHD1</scope>
</reference>
<reference key="49">
    <citation type="journal article" date="2017" name="Mol. Cell">
        <title>Single-molecule imaging reveals how Mre11-Rad50-Nbs1 initiates DNA break repair.</title>
        <authorList>
            <person name="Myler L.R."/>
            <person name="Gallardo I.F."/>
            <person name="Soniat M.M."/>
            <person name="Deshpande R.A."/>
            <person name="Gonzalez X.B."/>
            <person name="Kim Y."/>
            <person name="Paull T.T."/>
            <person name="Finkelstein I.J."/>
        </authorList>
    </citation>
    <scope>FUNCTION</scope>
    <scope>IDENTIFICATION IN THE MRN COMPLEX</scope>
</reference>
<reference key="50">
    <citation type="journal article" date="2017" name="Nat. Struct. Mol. Biol.">
        <title>Site-specific mapping of the human SUMO proteome reveals co-modification with phosphorylation.</title>
        <authorList>
            <person name="Hendriks I.A."/>
            <person name="Lyon D."/>
            <person name="Young C."/>
            <person name="Jensen L.J."/>
            <person name="Vertegaal A.C."/>
            <person name="Nielsen M.L."/>
        </authorList>
    </citation>
    <scope>SUMOYLATION [LARGE SCALE ANALYSIS] AT LYS-255; LYS-416 AND LYS-625</scope>
    <scope>IDENTIFICATION BY MASS SPECTROMETRY [LARGE SCALE ANALYSIS]</scope>
</reference>
<reference key="51">
    <citation type="journal article" date="2018" name="Nature">
        <title>SAMHD1 acts at stalled replication forks to prevent interferon induction.</title>
        <authorList>
            <person name="Coquel F."/>
            <person name="Silva M.J."/>
            <person name="Techer H."/>
            <person name="Zadorozhny K."/>
            <person name="Sharma S."/>
            <person name="Nieminuszczy J."/>
            <person name="Mettling C."/>
            <person name="Dardillac E."/>
            <person name="Barthe A."/>
            <person name="Schmitz A.L."/>
            <person name="Promonet A."/>
            <person name="Cribier A."/>
            <person name="Sarrazin A."/>
            <person name="Niedzwiedz W."/>
            <person name="Lopez B."/>
            <person name="Costanzo V."/>
            <person name="Krejci L."/>
            <person name="Chabes A."/>
            <person name="Benkirane M."/>
            <person name="Lin Y.L."/>
            <person name="Pasero P."/>
        </authorList>
    </citation>
    <scope>FUNCTION</scope>
    <scope>ACTIVITY REGULATION</scope>
    <scope>INTERACTION WITH SAMHD1</scope>
</reference>
<reference key="52">
    <citation type="journal article" date="2018" name="Nature">
        <title>DYNLL1 binds to MRE11 to limit DNA end resection in BRCA1-deficient cells.</title>
        <authorList>
            <person name="He Y.J."/>
            <person name="Meghani K."/>
            <person name="Caron M.C."/>
            <person name="Yang C."/>
            <person name="Ronato D.A."/>
            <person name="Bian J."/>
            <person name="Sharma A."/>
            <person name="Moore J."/>
            <person name="Niraj J."/>
            <person name="Detappe A."/>
            <person name="Doench J.G."/>
            <person name="Legube G."/>
            <person name="Root D.E."/>
            <person name="D'Andrea A.D."/>
            <person name="Drane P."/>
            <person name="De S."/>
            <person name="Konstantinopoulos P.A."/>
            <person name="Masson J.Y."/>
            <person name="Chowdhury D."/>
        </authorList>
    </citation>
    <scope>FUNCTION</scope>
    <scope>ACTIVITY REGULATION</scope>
    <scope>INTERACTION WITH DYNLL1</scope>
</reference>
<reference key="53">
    <citation type="journal article" date="2018" name="Nat. Commun.">
        <title>GFI1 facilitates efficient DNA repair by regulating PRMT1 dependent methylation of MRE11 and 53BP1.</title>
        <authorList>
            <person name="Vadnais C."/>
            <person name="Chen R."/>
            <person name="Fraszczak J."/>
            <person name="Yu Z."/>
            <person name="Boulais J."/>
            <person name="Pinder J."/>
            <person name="Frank D."/>
            <person name="Khandanpour C."/>
            <person name="Hebert J."/>
            <person name="Dellaire G."/>
            <person name="Cote J.F."/>
            <person name="Richard S."/>
            <person name="Orthwein A."/>
            <person name="Drobetsky E."/>
            <person name="Moeroey T."/>
        </authorList>
    </citation>
    <scope>METHYLATION</scope>
    <scope>INTERACTION WITH GFI1</scope>
</reference>
<reference key="54">
    <citation type="journal article" date="2019" name="Cell">
        <title>UBQLN4 represses homologous recombination and is overexpressed in aggressive tumors.</title>
        <authorList>
            <person name="Jachimowicz R.D."/>
            <person name="Beleggia F."/>
            <person name="Isensee J."/>
            <person name="Velpula B.B."/>
            <person name="Goergens J."/>
            <person name="Bustos M.A."/>
            <person name="Doll M.A."/>
            <person name="Shenoy A."/>
            <person name="Checa-Rodriguez C."/>
            <person name="Wiederstein J.L."/>
            <person name="Baranes-Bachar K."/>
            <person name="Bartenhagen C."/>
            <person name="Hertwig F."/>
            <person name="Teper N."/>
            <person name="Nishi T."/>
            <person name="Schmitt A."/>
            <person name="Distelmaier F."/>
            <person name="Luedecke H.J."/>
            <person name="Albrecht B."/>
            <person name="Krueger M."/>
            <person name="Schumacher B."/>
            <person name="Geiger T."/>
            <person name="Hoon D.S.B."/>
            <person name="Huertas P."/>
            <person name="Fischer M."/>
            <person name="Hucho T."/>
            <person name="Peifer M."/>
            <person name="Ziv Y."/>
            <person name="Reinhardt H.C."/>
            <person name="Wieczorek D."/>
            <person name="Shiloh Y."/>
        </authorList>
    </citation>
    <scope>FUNCTION</scope>
    <scope>UBIQUITINATION</scope>
    <scope>SUBCELLULAR LOCATION</scope>
    <scope>INTERACTION WITH UBQLN4</scope>
</reference>
<reference key="55">
    <citation type="journal article" date="2019" name="EMBO J.">
        <title>NBS1 promotes the endonuclease activity of the MRE11-RAD50 complex by sensing CtIP phosphorylation.</title>
        <authorList>
            <person name="Anand R."/>
            <person name="Jasrotia A."/>
            <person name="Bundschuh D."/>
            <person name="Howard S.M."/>
            <person name="Ranjha L."/>
            <person name="Stucki M."/>
            <person name="Cejka P."/>
        </authorList>
    </citation>
    <scope>FUNCTION</scope>
    <scope>ACTIVITY REGULATION</scope>
</reference>
<reference key="56">
    <citation type="journal article" date="2019" name="Mol. Cell">
        <title>C1QBP promotes homologous recombination by stabilizing MRE11 and controlling the assembly and activation of MRE11/RAD50/NBS1 complex.</title>
        <authorList>
            <person name="Bai Y."/>
            <person name="Wang W."/>
            <person name="Li S."/>
            <person name="Zhan J."/>
            <person name="Li H."/>
            <person name="Zhao M."/>
            <person name="Zhou X.A."/>
            <person name="Li S."/>
            <person name="Li X."/>
            <person name="Huo Y."/>
            <person name="Shen Q."/>
            <person name="Zhou M."/>
            <person name="Zhang H."/>
            <person name="Luo J."/>
            <person name="Sung P."/>
            <person name="Zhu W.G."/>
            <person name="Xu X."/>
            <person name="Wang J."/>
        </authorList>
    </citation>
    <scope>FUNCTION</scope>
    <scope>ACTIVITY REGULATION</scope>
    <scope>INTERACTION WITH C1QBP AND RAD50</scope>
    <scope>PHOSPHORYLATION AT SER-676 AND SER-678</scope>
    <scope>MUTAGENESIS OF 572-ARG--ARG-576 AND 676-SER--SER-678</scope>
</reference>
<reference key="57">
    <citation type="journal article" date="2019" name="Nat. Commun.">
        <title>MRE11-RAD50-NBS1 promotes Fanconi Anemia R-loop suppression at transcription-replication conflicts.</title>
        <authorList>
            <person name="Chang E.Y."/>
            <person name="Tsai S."/>
            <person name="Aristizabal M.J."/>
            <person name="Wells J.P."/>
            <person name="Coulombe Y."/>
            <person name="Busatto F.F."/>
            <person name="Chan Y.A."/>
            <person name="Kumar A."/>
            <person name="Dan Zhu Y."/>
            <person name="Wang A.Y."/>
            <person name="Fournier L.A."/>
            <person name="Hieter P."/>
            <person name="Kobor M.S."/>
            <person name="Masson J.Y."/>
            <person name="Stirling P.C."/>
        </authorList>
    </citation>
    <scope>FUNCTION</scope>
</reference>
<reference key="58">
    <citation type="journal article" date="2019" name="Nucleic Acids Res.">
        <title>MRE11 UFMylation promotes ATM activation.</title>
        <authorList>
            <person name="Wang Z."/>
            <person name="Gong Y."/>
            <person name="Peng B."/>
            <person name="Shi R."/>
            <person name="Fan D."/>
            <person name="Zhao H."/>
            <person name="Zhu M."/>
            <person name="Zhang H."/>
            <person name="Lou Z."/>
            <person name="Zhou J."/>
            <person name="Zhu W.G."/>
            <person name="Cong Y.S."/>
            <person name="Xu X."/>
        </authorList>
    </citation>
    <scope>UFMYLATION AT LYS-282</scope>
    <scope>MUTAGENESIS OF LYS-282</scope>
</reference>
<reference key="59">
    <citation type="journal article" date="2021" name="Cells">
        <title>A Role for RAGE in DNA Double Strand Breaks (DSBs) Detected in Pathological Placentas and Trophoblast Cells.</title>
        <authorList>
            <person name="Tsai K.Y.F."/>
            <person name="Tullis B."/>
            <person name="Breithaupt K.L."/>
            <person name="Fowers R."/>
            <person name="Jones N."/>
            <person name="Grajeda S."/>
            <person name="Reynolds P.R."/>
            <person name="Arroyo J.A."/>
        </authorList>
    </citation>
    <scope>INTERACTION WITH AGER</scope>
</reference>
<reference key="60">
    <citation type="journal article" date="2022" name="Nat. Commun.">
        <title>Crosstalk between SUMOylation and ubiquitylation controls DNA end resection by maintaining MRE11 homeostasis on chromatin.</title>
        <authorList>
            <person name="Zhang T."/>
            <person name="Yang H."/>
            <person name="Zhou Z."/>
            <person name="Bai Y."/>
            <person name="Wang J."/>
            <person name="Wang W."/>
        </authorList>
    </citation>
    <scope>FUNCTION</scope>
    <scope>SUBCELLULAR LOCATION</scope>
    <scope>SUMOYLATION AT LYS-255; LYS-384; LYS-416 AND LYS-467</scope>
    <scope>MUTAGENESIS OF LYS-255; LYS-384; LYS-416 AND LYS-467</scope>
</reference>
<reference key="61">
    <citation type="journal article" date="2023" name="Adv. Sci.">
        <title>RNF126-mediated MRE11 ubiquitination activates the DNA damage response and confers resistance of triple-negative breast cancer to radiotherapy.</title>
        <authorList>
            <person name="Liu W."/>
            <person name="Zheng M."/>
            <person name="Zhang R."/>
            <person name="Jiang Q."/>
            <person name="Du G."/>
            <person name="Wu Y."/>
            <person name="Yang C."/>
            <person name="Li F."/>
            <person name="Li W."/>
            <person name="Wang L."/>
            <person name="Wu J."/>
            <person name="Shi L."/>
            <person name="Li W."/>
            <person name="Zhang K."/>
            <person name="Zhou Z."/>
            <person name="Liu R."/>
            <person name="Gao Y."/>
            <person name="Huang X."/>
            <person name="Fan S."/>
            <person name="Zhi X."/>
            <person name="Jiang D."/>
            <person name="Chen C."/>
        </authorList>
    </citation>
    <scope>FUNCTION</scope>
    <scope>UBIQUITINATION AT LYS-339 AND LYS-480</scope>
    <scope>MUTAGENESIS OF LYS-339 AND LYS-480</scope>
</reference>
<reference key="62">
    <citation type="journal article" date="2023" name="Nat. Struct. Mol. Biol.">
        <title>Dynamics of the DYNLL1-MRE11 complex regulate DNA end resection and recruitment of Shieldin to DSBs.</title>
        <authorList>
            <person name="Swift M.L."/>
            <person name="Zhou R."/>
            <person name="Syed A."/>
            <person name="Moreau L.A."/>
            <person name="Tomasik B."/>
            <person name="Tainer J.A."/>
            <person name="Konstantinopoulos P.A."/>
            <person name="D'Andrea A.D."/>
            <person name="He Y.J."/>
            <person name="Chowdhury D."/>
        </authorList>
    </citation>
    <scope>FUNCTION</scope>
    <scope>ACTIVITY REGULATION</scope>
    <scope>INTERACTION WITH DYNLL1</scope>
</reference>
<reference key="63">
    <citation type="journal article" date="2024" name="Cell">
        <title>Metabolic regulation of homologous recombination repair by MRE11 lactylation.</title>
        <authorList>
            <person name="Chen Y."/>
            <person name="Wu J."/>
            <person name="Zhai L."/>
            <person name="Zhang T."/>
            <person name="Yin H."/>
            <person name="Gao H."/>
            <person name="Zhao F."/>
            <person name="Wang Z."/>
            <person name="Yang X."/>
            <person name="Jin M."/>
            <person name="Huang B."/>
            <person name="Ding X."/>
            <person name="Li R."/>
            <person name="Yang J."/>
            <person name="He Y."/>
            <person name="Wang Q."/>
            <person name="Wang W."/>
            <person name="Kloeber J.A."/>
            <person name="Li Y."/>
            <person name="Hao B."/>
            <person name="Zhang Y."/>
            <person name="Wang J."/>
            <person name="Tan M."/>
            <person name="Li K."/>
            <person name="Wang P."/>
            <person name="Lou Z."/>
            <person name="Yuan J."/>
        </authorList>
    </citation>
    <scope>FUNCTION</scope>
    <scope>LACTYLATION AT LYS-673</scope>
    <scope>MUTAGENESIS OF LYS-673</scope>
</reference>
<reference evidence="63" key="64">
    <citation type="journal article" date="2011" name="Structure">
        <title>Crystal structure of human Mre11: understanding tumorigenic mutations.</title>
        <authorList>
            <person name="Park Y.B."/>
            <person name="Chae J."/>
            <person name="Kim Y.C."/>
            <person name="Cho Y."/>
        </authorList>
    </citation>
    <scope>X-RAY CRYSTALLOGRAPHY (3.00 ANGSTROMS) OF 1-411 IN COMPLEX WITH MN(2+)</scope>
    <scope>COFACTOR</scope>
    <scope>MUTAGENESIS OF ARG-80; 87-ARG--ASN-117; PRO-88; ASN-117 AND PRO-121</scope>
</reference>
<reference evidence="64" key="65">
    <citation type="journal article" date="2023" name="Mol. Cell">
        <title>Cryo-EM structure of the Mre11-Rad50-Nbs1 complex reveals the molecular mechanism of scaffolding functions.</title>
        <authorList>
            <person name="Rotheneder M."/>
            <person name="Stakyte K."/>
            <person name="van de Logt E."/>
            <person name="Bartho J.D."/>
            <person name="Lammens K."/>
            <person name="Fan Y."/>
            <person name="Alt A."/>
            <person name="Kessler B."/>
            <person name="Jung C."/>
            <person name="Roos W.P."/>
            <person name="Steigenberger B."/>
            <person name="Hopfner K.P."/>
        </authorList>
    </citation>
    <scope>STRUCTURE BY ELECTRON MICROSCOPY (4.13 ANGSTROMS) IN COMPLEX WITH MANGANESE AND NBN</scope>
    <scope>COFACTOR</scope>
    <scope>IDENTIFICATION IN THE MRE11 COMPLEX</scope>
</reference>
<reference key="66">
    <citation type="journal article" date="1999" name="Cell">
        <title>The DNA double-strand break repair gene hMRE11 is mutated in individuals with an ataxia-telangiectasia-like disorder.</title>
        <authorList>
            <person name="Stewart G.S."/>
            <person name="Maser R.S."/>
            <person name="Stankovic T."/>
            <person name="Bressan D.A."/>
            <person name="Kaplan M.I."/>
            <person name="Jaspers N.G.J."/>
            <person name="Raams A."/>
            <person name="Byrd P.J."/>
            <person name="Petrini J.H.J."/>
            <person name="Taylor A.M.R."/>
        </authorList>
    </citation>
    <scope>VARIANTS ATLD1 SER-117 AND 633-ARG--ARG-708 DEL</scope>
</reference>
<reference key="67">
    <citation type="journal article" date="2001" name="Cancer Res.">
        <title>Alterations of the double-strand break repair gene MRE11 in cancer.</title>
        <authorList>
            <person name="Fukuda T."/>
            <person name="Sumiyoshi T."/>
            <person name="Takahashi M."/>
            <person name="Kataoka T."/>
            <person name="Asahara T."/>
            <person name="Inui H."/>
            <person name="Watatani M."/>
            <person name="Yasutomi M."/>
            <person name="Kamada N."/>
            <person name="Miyagawa K."/>
        </authorList>
    </citation>
    <scope>VARIANTS CANCER CYS-104; HIS-503 AND GLN-572</scope>
</reference>
<reference key="68">
    <citation type="journal article" date="2004" name="Hum. Mol. Genet.">
        <title>MRE11 mutations and impaired ATM-dependent responses in an Italian family with ataxia-telangiectasia-like disorder.</title>
        <authorList>
            <person name="Delia D."/>
            <person name="Piane M."/>
            <person name="Buscemi G."/>
            <person name="Savio C."/>
            <person name="Palmeri S."/>
            <person name="Lulli P."/>
            <person name="Carlessi L."/>
            <person name="Fontanella E."/>
            <person name="Chessa L."/>
        </authorList>
    </citation>
    <scope>VARIANTS ATLD1 SER-117; LYS-481; 572-ARG--ARG-708 DEL AND 633-ARG--ARG-708 DEL</scope>
</reference>
<reference key="69">
    <citation type="journal article" date="2003" name="J. Med. Genet.">
        <title>Mutation screening of Mre11 complex genes: indication of RAD50 involvement in breast and ovarian cancer susceptibility.</title>
        <authorList>
            <person name="Heikkinen K."/>
            <person name="Karppinen S.-M."/>
            <person name="Soini Y."/>
            <person name="Maekinen M."/>
            <person name="Winqvist R."/>
        </authorList>
    </citation>
    <scope>VARIANT OVARIAN CANCER TRP-305</scope>
</reference>
<reference key="70">
    <citation type="journal article" date="2005" name="Hum. Mol. Genet.">
        <title>Identification and functional consequences of a novel MRE11 mutation affecting 10 Saudi Arabian patients with the ataxia telangiectasia-like disorder.</title>
        <authorList>
            <person name="Fernet M."/>
            <person name="Gribaa M."/>
            <person name="Salih M.A."/>
            <person name="Seidahmed M.Z."/>
            <person name="Hall J."/>
            <person name="Koenig M."/>
        </authorList>
    </citation>
    <scope>VARIANT ATLD1 CYS-210</scope>
</reference>
<reference key="71">
    <citation type="journal article" date="2006" name="Science">
        <title>The consensus coding sequences of human breast and colorectal cancers.</title>
        <authorList>
            <person name="Sjoeblom T."/>
            <person name="Jones S."/>
            <person name="Wood L.D."/>
            <person name="Parsons D.W."/>
            <person name="Lin J."/>
            <person name="Barber T.D."/>
            <person name="Mandelker D."/>
            <person name="Leary R.J."/>
            <person name="Ptak J."/>
            <person name="Silliman N."/>
            <person name="Szabo S."/>
            <person name="Buckhaults P."/>
            <person name="Farrell C."/>
            <person name="Meeh P."/>
            <person name="Markowitz S.D."/>
            <person name="Willis J."/>
            <person name="Dawson D."/>
            <person name="Willson J.K.V."/>
            <person name="Gazdar A.F."/>
            <person name="Hartigan J."/>
            <person name="Wu L."/>
            <person name="Liu C."/>
            <person name="Parmigiani G."/>
            <person name="Park B.H."/>
            <person name="Bachman K.E."/>
            <person name="Papadopoulos N."/>
            <person name="Vogelstein B."/>
            <person name="Kinzler K.W."/>
            <person name="Velculescu V.E."/>
        </authorList>
    </citation>
    <scope>VARIANTS [LARGE SCALE ANALYSIS] CYS-237 AND TYR-302</scope>
</reference>
<reference key="72">
    <citation type="journal article" date="2009" name="J. Pediatr.">
        <title>Two brothers with ataxia-telangiectasia-like disorder with lung adenocarcinoma.</title>
        <authorList>
            <person name="Uchisaka N."/>
            <person name="Takahashi N."/>
            <person name="Sato M."/>
            <person name="Kikuchi A."/>
            <person name="Mochizuki S."/>
            <person name="Imai K."/>
            <person name="Nonoyama S."/>
            <person name="Ohara O."/>
            <person name="Watanabe F."/>
            <person name="Mizutani S."/>
            <person name="Hanada R."/>
            <person name="Morio T."/>
        </authorList>
    </citation>
    <scope>VARIANT ATLD1 ARG-243</scope>
</reference>
<reference key="73">
    <citation type="journal article" date="2012" name="Nucleic Acids Res.">
        <title>Mre11 ATLD17/18 mutation retains Tel1/ATM activity but blocks DNA double-strand break repair.</title>
        <authorList>
            <person name="Limbo O."/>
            <person name="Moiani D."/>
            <person name="Kertokalio A."/>
            <person name="Wyman C."/>
            <person name="Tainer J.A."/>
            <person name="Russell P."/>
        </authorList>
    </citation>
    <scope>FUNCTION</scope>
    <scope>VARIANT ATLD1 ARG-243</scope>
    <scope>CHARACTERIZATION OF VARIANT ATLD1 ARG-243</scope>
</reference>
<reference key="74">
    <citation type="journal article" date="2014" name="J. Neurol. Sci.">
        <title>Exome sequencing reveals a novel MRE11 mutation in a patient with progressive myoclonic ataxia.</title>
        <authorList>
            <person name="Miyamoto R."/>
            <person name="Morino H."/>
            <person name="Yoshizawa A."/>
            <person name="Miyazaki Y."/>
            <person name="Maruyama H."/>
            <person name="Murakami N."/>
            <person name="Fukada K."/>
            <person name="Izumi Y."/>
            <person name="Matsuura S."/>
            <person name="Kaji R."/>
            <person name="Kawakami H."/>
        </authorList>
    </citation>
    <scope>VARIANT ATLD1 VAL-47</scope>
</reference>
<keyword id="KW-0002">3D-structure</keyword>
<keyword id="KW-0007">Acetylation</keyword>
<keyword id="KW-0025">Alternative splicing</keyword>
<keyword id="KW-0158">Chromosome</keyword>
<keyword id="KW-1186">Ciliopathy</keyword>
<keyword id="KW-0225">Disease variant</keyword>
<keyword id="KW-0227">DNA damage</keyword>
<keyword id="KW-0234">DNA repair</keyword>
<keyword id="KW-0255">Endonuclease</keyword>
<keyword id="KW-0269">Exonuclease</keyword>
<keyword id="KW-0945">Host-virus interaction</keyword>
<keyword id="KW-0378">Hydrolase</keyword>
<keyword id="KW-1017">Isopeptide bond</keyword>
<keyword id="KW-0464">Manganese</keyword>
<keyword id="KW-0469">Meiosis</keyword>
<keyword id="KW-0488">Methylation</keyword>
<keyword id="KW-0540">Nuclease</keyword>
<keyword id="KW-0539">Nucleus</keyword>
<keyword id="KW-0597">Phosphoprotein</keyword>
<keyword id="KW-1267">Proteomics identification</keyword>
<keyword id="KW-1185">Reference proteome</keyword>
<keyword id="KW-0779">Telomere</keyword>
<keyword id="KW-0832">Ubl conjugation</keyword>
<feature type="initiator methionine" description="Removed" evidence="66 70">
    <location>
        <position position="1"/>
    </location>
</feature>
<feature type="chain" id="PRO_0000138672" description="Double-strand break repair protein MRE11">
    <location>
        <begin position="2"/>
        <end position="708"/>
    </location>
</feature>
<feature type="region of interest" description="Interaction with NBN" evidence="27">
    <location>
        <begin position="87"/>
        <end position="117"/>
    </location>
</feature>
<feature type="region of interest" description="Disordered" evidence="2">
    <location>
        <begin position="507"/>
        <end position="540"/>
    </location>
</feature>
<feature type="region of interest" description="Disordered" evidence="2">
    <location>
        <begin position="556"/>
        <end position="614"/>
    </location>
</feature>
<feature type="region of interest" description="Disordered" evidence="2">
    <location>
        <begin position="651"/>
        <end position="708"/>
    </location>
</feature>
<feature type="short sequence motif" description="GAR" evidence="18">
    <location>
        <begin position="570"/>
        <end position="594"/>
    </location>
</feature>
<feature type="compositionally biased region" description="Basic residues" evidence="2">
    <location>
        <begin position="569"/>
        <end position="579"/>
    </location>
</feature>
<feature type="compositionally biased region" description="Polar residues" evidence="2">
    <location>
        <begin position="599"/>
        <end position="614"/>
    </location>
</feature>
<feature type="compositionally biased region" description="Low complexity" evidence="2">
    <location>
        <begin position="667"/>
        <end position="681"/>
    </location>
</feature>
<feature type="compositionally biased region" description="Acidic residues" evidence="2">
    <location>
        <begin position="687"/>
        <end position="696"/>
    </location>
</feature>
<feature type="compositionally biased region" description="Polar residues" evidence="2">
    <location>
        <begin position="698"/>
        <end position="708"/>
    </location>
</feature>
<feature type="active site" description="Proton donor" evidence="1">
    <location>
        <position position="129"/>
    </location>
</feature>
<feature type="binding site" evidence="27 52 63 64">
    <location>
        <position position="20"/>
    </location>
    <ligand>
        <name>Mn(2+)</name>
        <dbReference type="ChEBI" id="CHEBI:29035"/>
        <label>1</label>
    </ligand>
</feature>
<feature type="binding site" evidence="27 52 63 64">
    <location>
        <position position="22"/>
    </location>
    <ligand>
        <name>Mn(2+)</name>
        <dbReference type="ChEBI" id="CHEBI:29035"/>
        <label>1</label>
    </ligand>
</feature>
<feature type="binding site" evidence="27 52 63 64">
    <location>
        <position position="60"/>
    </location>
    <ligand>
        <name>Mn(2+)</name>
        <dbReference type="ChEBI" id="CHEBI:29035"/>
        <label>1</label>
    </ligand>
</feature>
<feature type="binding site" evidence="27 52 63 64">
    <location>
        <position position="60"/>
    </location>
    <ligand>
        <name>Mn(2+)</name>
        <dbReference type="ChEBI" id="CHEBI:29035"/>
        <label>2</label>
    </ligand>
</feature>
<feature type="binding site" evidence="27 52 63 64">
    <location>
        <position position="128"/>
    </location>
    <ligand>
        <name>Mn(2+)</name>
        <dbReference type="ChEBI" id="CHEBI:29035"/>
        <label>2</label>
    </ligand>
</feature>
<feature type="binding site" evidence="27 52 63 64">
    <location>
        <position position="217"/>
    </location>
    <ligand>
        <name>Mn(2+)</name>
        <dbReference type="ChEBI" id="CHEBI:29035"/>
        <label>2</label>
    </ligand>
</feature>
<feature type="binding site" evidence="27 52 63 64">
    <location>
        <position position="245"/>
    </location>
    <ligand>
        <name>Mn(2+)</name>
        <dbReference type="ChEBI" id="CHEBI:29035"/>
        <label>2</label>
    </ligand>
</feature>
<feature type="binding site" evidence="27 52 63 64">
    <location>
        <position position="247"/>
    </location>
    <ligand>
        <name>Mn(2+)</name>
        <dbReference type="ChEBI" id="CHEBI:29035"/>
        <label>1</label>
    </ligand>
</feature>
<feature type="modified residue" description="N-acetylserine" evidence="66 70">
    <location>
        <position position="2"/>
    </location>
</feature>
<feature type="modified residue" description="Phosphoserine" evidence="1">
    <location>
        <position position="2"/>
    </location>
</feature>
<feature type="modified residue" description="Phosphoserine" evidence="71">
    <location>
        <position position="275"/>
    </location>
</feature>
<feature type="modified residue" description="Asymmetric dimethylarginine" evidence="18">
    <location>
        <position position="570"/>
    </location>
</feature>
<feature type="modified residue" description="Asymmetric dimethylarginine" evidence="18">
    <location>
        <position position="572"/>
    </location>
</feature>
<feature type="modified residue" description="Asymmetric dimethylarginine" evidence="18">
    <location>
        <position position="574"/>
    </location>
</feature>
<feature type="modified residue" description="Asymmetric dimethylarginine" evidence="18">
    <location>
        <position position="576"/>
    </location>
</feature>
<feature type="modified residue" description="Asymmetric dimethylarginine" evidence="18">
    <location>
        <position position="577"/>
    </location>
</feature>
<feature type="modified residue" description="Asymmetric dimethylarginine" evidence="18">
    <location>
        <position position="580"/>
    </location>
</feature>
<feature type="modified residue" description="Asymmetric dimethylarginine" evidence="18">
    <location>
        <position position="587"/>
    </location>
</feature>
<feature type="modified residue" description="Asymmetric dimethylarginine" evidence="18">
    <location>
        <position position="592"/>
    </location>
</feature>
<feature type="modified residue" description="Asymmetric dimethylarginine" evidence="18">
    <location>
        <position position="594"/>
    </location>
</feature>
<feature type="modified residue" description="Phosphoserine" evidence="71">
    <location>
        <position position="619"/>
    </location>
</feature>
<feature type="modified residue" description="Phosphoserine" evidence="1">
    <location>
        <position position="641"/>
    </location>
</feature>
<feature type="modified residue" description="Phosphoserine; by PLK1" evidence="38 65 67 72">
    <location>
        <position position="649"/>
    </location>
</feature>
<feature type="modified residue" description="N6-lactoyllysine" evidence="54">
    <location>
        <position position="673"/>
    </location>
</feature>
<feature type="modified residue" description="Phosphoserine; by ATM" evidence="33 47">
    <location>
        <position position="676"/>
    </location>
</feature>
<feature type="modified residue" description="Phosphoserine; by ATM" evidence="33 47 71">
    <location>
        <position position="678"/>
    </location>
</feature>
<feature type="modified residue" description="Phosphoserine; by CDK2" evidence="38 65 67 68 69 71 72">
    <location>
        <position position="688"/>
    </location>
</feature>
<feature type="modified residue" description="Phosphoserine" evidence="65 67 68 69 71 72">
    <location>
        <position position="689"/>
    </location>
</feature>
<feature type="modified residue" description="Phosphoserine" evidence="65">
    <location>
        <position position="701"/>
    </location>
</feature>
<feature type="cross-link" description="Glycyl lysine isopeptide (Lys-Gly) (interchain with G-Cter in SUMO2)" evidence="50 73">
    <location>
        <position position="255"/>
    </location>
</feature>
<feature type="cross-link" description="Glycyl lysine isopeptide (Lys-Gly) (interchain with G-Cter in UFM1)">
    <location>
        <position position="282"/>
    </location>
</feature>
<feature type="cross-link" description="Glycyl lysine isopeptide (Lys-Gly) (interchain with G-Cter in ubiquitin)" evidence="51">
    <location>
        <position position="339"/>
    </location>
</feature>
<feature type="cross-link" description="Glycyl lysine isopeptide (Lys-Gly) (interchain with G-Cter in SUMO)" evidence="50">
    <location>
        <position position="384"/>
    </location>
</feature>
<feature type="cross-link" description="Glycyl lysine isopeptide (Lys-Gly) (interchain with G-Cter in SUMO2)" evidence="50 73">
    <location>
        <position position="416"/>
    </location>
</feature>
<feature type="cross-link" description="Glycyl lysine isopeptide (Lys-Gly) (interchain with G-Cter in SUMO)" evidence="50">
    <location>
        <position position="467"/>
    </location>
</feature>
<feature type="cross-link" description="Glycyl lysine isopeptide (Lys-Gly) (interchain with G-Cter in ubiquitin)" evidence="51">
    <location>
        <position position="480"/>
    </location>
</feature>
<feature type="cross-link" description="Glycyl lysine isopeptide (Lys-Gly) (interchain with G-Cter in SUMO2)" evidence="73">
    <location>
        <position position="625"/>
    </location>
</feature>
<feature type="splice variant" id="VSP_057350" description="In isoform 3." evidence="59">
    <original>MSTADAL</original>
    <variation>MNRNISHQKG</variation>
    <location>
        <begin position="1"/>
        <end position="7"/>
    </location>
</feature>
<feature type="splice variant" id="VSP_003262" description="In isoform 2." evidence="60">
    <location>
        <begin position="595"/>
        <end position="622"/>
    </location>
</feature>
<feature type="sequence variant" id="VAR_089002" description="In ATLD1; dbSNP:rs730880378." evidence="31">
    <original>A</original>
    <variation>V</variation>
    <location>
        <position position="47"/>
    </location>
</feature>
<feature type="sequence variant" id="VAR_011625" description="In cancer; dbSNP:rs748434421." evidence="7">
    <original>S</original>
    <variation>C</variation>
    <location>
        <position position="104"/>
    </location>
</feature>
<feature type="sequence variant" id="VAR_008513" description="In ATLD1; dbSNP:rs137852760." evidence="3 14">
    <original>N</original>
    <variation>S</variation>
    <location>
        <position position="117"/>
    </location>
</feature>
<feature type="sequence variant" id="VAR_011626" description="In dbSNP:rs147771140.">
    <original>M</original>
    <variation>V</variation>
    <location>
        <position position="157"/>
    </location>
</feature>
<feature type="sequence variant" id="VAR_089003" description="In ATLD1; dbSNP:rs137852763." evidence="16">
    <original>W</original>
    <variation>C</variation>
    <location>
        <position position="210"/>
    </location>
</feature>
<feature type="sequence variant" id="VAR_036416" description="In a breast cancer sample; somatic mutation." evidence="23">
    <original>F</original>
    <variation>C</variation>
    <location>
        <position position="237"/>
    </location>
</feature>
<feature type="sequence variant" id="VAR_089004" description="In ATLD1; does not affect the DNA-binding and nuclease activities." evidence="25 29">
    <original>W</original>
    <variation>R</variation>
    <location>
        <position position="243"/>
    </location>
</feature>
<feature type="sequence variant" id="VAR_036417" description="In a breast cancer sample; somatic mutation." evidence="23">
    <original>H</original>
    <variation>Y</variation>
    <location>
        <position position="302"/>
    </location>
</feature>
<feature type="sequence variant" id="VAR_025528" description="In ovarian cancer; dbSNP:rs372000848." evidence="12">
    <original>R</original>
    <variation>W</variation>
    <location>
        <position position="305"/>
    </location>
</feature>
<feature type="sequence variant" id="VAR_019288" description="In dbSNP:rs1805367." evidence="58">
    <original>D</original>
    <variation>G</variation>
    <location>
        <position position="468"/>
    </location>
</feature>
<feature type="sequence variant" id="VAR_089005" description="In ATLD1; dbSNP:rs137852762." evidence="14">
    <original>T</original>
    <variation>K</variation>
    <location>
        <position position="481"/>
    </location>
</feature>
<feature type="sequence variant" id="VAR_011627" description="In cancer; dbSNP:rs774057024." evidence="7">
    <original>R</original>
    <variation>H</variation>
    <location>
        <position position="503"/>
    </location>
</feature>
<feature type="sequence variant" id="VAR_089006" description="In ATLD1." evidence="8 14">
    <location>
        <begin position="572"/>
        <end position="708"/>
    </location>
</feature>
<feature type="sequence variant" id="VAR_011628" description="In cancer; dbSNP:rs200085146." evidence="7">
    <original>R</original>
    <variation>Q</variation>
    <location>
        <position position="572"/>
    </location>
</feature>
<feature type="sequence variant" id="VAR_089007" description="In ATLD1." evidence="3 14">
    <location>
        <begin position="633"/>
        <end position="708"/>
    </location>
</feature>
<feature type="sequence variant" id="VAR_019289" description="In dbSNP:rs1805362." evidence="58">
    <original>M</original>
    <variation>V</variation>
    <location>
        <position position="698"/>
    </location>
</feature>
<feature type="mutagenesis site" description="Abolished interaction with NBN." evidence="27">
    <original>R</original>
    <variation>A</variation>
    <location>
        <position position="80"/>
    </location>
</feature>
<feature type="mutagenesis site" description="Abolished interaction with NBN." evidence="27">
    <location>
        <begin position="87"/>
        <end position="117"/>
    </location>
</feature>
<feature type="mutagenesis site" description="Does not affect interaction with NBN." evidence="27">
    <original>P</original>
    <variation>W</variation>
    <location>
        <position position="88"/>
    </location>
</feature>
<feature type="mutagenesis site" description="Abolished interaction with NBN." evidence="27">
    <original>N</original>
    <variation>L</variation>
    <location>
        <position position="117"/>
    </location>
</feature>
<feature type="mutagenesis site" description="Abolished interaction with NBN." evidence="27">
    <original>P</original>
    <variation>G</variation>
    <location>
        <position position="121"/>
    </location>
</feature>
<feature type="mutagenesis site" description="Lacks the exonuclease activity." evidence="37">
    <original>HD</original>
    <variation>LV</variation>
    <location>
        <begin position="129"/>
        <end position="130"/>
    </location>
</feature>
<feature type="mutagenesis site" description="In 4KR mutant; strongly decreased SUMOylation; when associated with R-384, R-416 and R-467." evidence="50">
    <original>K</original>
    <variation>R</variation>
    <location>
        <position position="255"/>
    </location>
</feature>
<feature type="mutagenesis site" description="Abolished ufmylation." evidence="45">
    <original>K</original>
    <variation>R</variation>
    <location>
        <position position="282"/>
    </location>
</feature>
<feature type="mutagenesis site" description="Abolished ubiquitination by RNF126; when associated with R-480." evidence="51">
    <original>K</original>
    <variation>R</variation>
    <location>
        <position position="339"/>
    </location>
</feature>
<feature type="mutagenesis site" description="In 4KR mutant; strongly decreased SUMOylation; when associated with R-255, R-416 and R-467." evidence="50">
    <original>K</original>
    <variation>R</variation>
    <location>
        <position position="384"/>
    </location>
</feature>
<feature type="mutagenesis site" description="In 4KR mutant; strongly decreased SUMOylation; when associated with R-255, R-384 and R-467." evidence="50">
    <original>K</original>
    <variation>R</variation>
    <location>
        <position position="416"/>
    </location>
</feature>
<feature type="mutagenesis site" description="In 4KR mutant; strongly decreased SUMOylation; when associated with R-255, R-384 and R-416." evidence="50">
    <original>K</original>
    <variation>R</variation>
    <location>
        <position position="467"/>
    </location>
</feature>
<feature type="mutagenesis site" description="Abolished ubiquitination by RNF126; when associated with R-339." evidence="51">
    <original>K</original>
    <variation>R</variation>
    <location>
        <position position="480"/>
    </location>
</feature>
<feature type="mutagenesis site" description="Does not affect phosphorylation by ATM; when associated with A-590." evidence="33">
    <original>S</original>
    <variation>A</variation>
    <location>
        <position position="531"/>
    </location>
</feature>
<feature type="mutagenesis site" description="Abolished methylation, leading to decreased exonuclease activity." evidence="18">
    <original>RGRGRGRRGGRGQNSASRGGSQRGR</original>
    <variation>KGKGKGKKGGKGQNSASKGGSQKGK</variation>
    <location>
        <begin position="570"/>
        <end position="594"/>
    </location>
</feature>
<feature type="mutagenesis site" description="Abolished interaction with C1QBP." evidence="47">
    <original>RGRGR</original>
    <variation>QGRGQ</variation>
    <location>
        <begin position="572"/>
        <end position="576"/>
    </location>
</feature>
<feature type="mutagenesis site" description="Does not affect phosphorylation by ATM; when associated with A-531." evidence="33">
    <original>S</original>
    <variation>A</variation>
    <location>
        <position position="590"/>
    </location>
</feature>
<feature type="mutagenesis site" description="Decreased phosphorylation; when associated with A-688." evidence="38">
    <original>S</original>
    <variation>A</variation>
    <location>
        <position position="649"/>
    </location>
</feature>
<feature type="mutagenesis site" description="Mimics phosphorylation; decreased ability to mediate DNA repair; when associated with D-688." evidence="38">
    <original>S</original>
    <variation>D</variation>
    <location>
        <position position="649"/>
    </location>
</feature>
<feature type="mutagenesis site" description="Abolished lactylation by CREBBP/CBP, leading to decreased DNA-binding." evidence="54">
    <original>K</original>
    <variation>R</variation>
    <location>
        <position position="673"/>
    </location>
</feature>
<feature type="mutagenesis site" description="Impaired phosphorylation by ATM, preventing interaction with C1QBP." evidence="33 47">
    <original>SQS</original>
    <variation>AQA</variation>
    <location>
        <begin position="676"/>
        <end position="678"/>
    </location>
</feature>
<feature type="mutagenesis site" description="Decreased phosphorylation; when associated with A-649." evidence="38">
    <original>S</original>
    <variation>A</variation>
    <location>
        <position position="688"/>
    </location>
</feature>
<feature type="mutagenesis site" description="Mimics phosphorylation; decreased ability to mediate DNA repair; when associated with D-649." evidence="38">
    <original>S</original>
    <variation>D</variation>
    <location>
        <position position="688"/>
    </location>
</feature>
<feature type="sequence conflict" description="In Ref. 1; AAC78721." evidence="61" ref="1">
    <original>V</original>
    <variation>A</variation>
    <location>
        <position position="31"/>
    </location>
</feature>
<feature type="helix" evidence="74">
    <location>
        <begin position="9"/>
        <end position="11"/>
    </location>
</feature>
<feature type="strand" evidence="74">
    <location>
        <begin position="12"/>
        <end position="18"/>
    </location>
</feature>
<feature type="turn" evidence="74">
    <location>
        <begin position="24"/>
        <end position="26"/>
    </location>
</feature>
<feature type="turn" evidence="74">
    <location>
        <begin position="30"/>
        <end position="34"/>
    </location>
</feature>
<feature type="helix" evidence="74">
    <location>
        <begin position="35"/>
        <end position="49"/>
    </location>
</feature>
<feature type="strand" evidence="74">
    <location>
        <begin position="53"/>
        <end position="57"/>
    </location>
</feature>
<feature type="strand" evidence="74">
    <location>
        <begin position="62"/>
        <end position="66"/>
    </location>
</feature>
<feature type="helix" evidence="74">
    <location>
        <begin position="69"/>
        <end position="83"/>
    </location>
</feature>
<feature type="strand" evidence="74">
    <location>
        <begin position="122"/>
        <end position="124"/>
    </location>
</feature>
<feature type="strand" evidence="74">
    <location>
        <begin position="128"/>
        <end position="130"/>
    </location>
</feature>
<feature type="turn" evidence="74">
    <location>
        <begin position="134"/>
        <end position="137"/>
    </location>
</feature>
<feature type="helix" evidence="74">
    <location>
        <begin position="140"/>
        <end position="147"/>
    </location>
</feature>
<feature type="strand" evidence="74">
    <location>
        <begin position="149"/>
        <end position="152"/>
    </location>
</feature>
<feature type="strand" evidence="74">
    <location>
        <begin position="162"/>
        <end position="164"/>
    </location>
</feature>
<feature type="strand" evidence="74">
    <location>
        <begin position="167"/>
        <end position="171"/>
    </location>
</feature>
<feature type="strand" evidence="74">
    <location>
        <begin position="174"/>
        <end position="181"/>
    </location>
</feature>
<feature type="helix" evidence="74">
    <location>
        <begin position="186"/>
        <end position="194"/>
    </location>
</feature>
<feature type="strand" evidence="74">
    <location>
        <begin position="198"/>
        <end position="200"/>
    </location>
</feature>
<feature type="helix" evidence="74">
    <location>
        <begin position="207"/>
        <end position="209"/>
    </location>
</feature>
<feature type="strand" evidence="74">
    <location>
        <begin position="210"/>
        <end position="216"/>
    </location>
</feature>
<feature type="strand" evidence="74">
    <location>
        <begin position="223"/>
        <end position="228"/>
    </location>
</feature>
<feature type="helix" evidence="74">
    <location>
        <begin position="231"/>
        <end position="233"/>
    </location>
</feature>
<feature type="strand" evidence="74">
    <location>
        <begin position="240"/>
        <end position="243"/>
    </location>
</feature>
<feature type="strand" evidence="74">
    <location>
        <begin position="250"/>
        <end position="255"/>
    </location>
</feature>
<feature type="turn" evidence="74">
    <location>
        <begin position="257"/>
        <end position="259"/>
    </location>
</feature>
<feature type="strand" evidence="74">
    <location>
        <begin position="262"/>
        <end position="265"/>
    </location>
</feature>
<feature type="helix" evidence="74">
    <location>
        <begin position="276"/>
        <end position="279"/>
    </location>
</feature>
<feature type="strand" evidence="74">
    <location>
        <begin position="283"/>
        <end position="290"/>
    </location>
</feature>
<feature type="strand" evidence="74">
    <location>
        <begin position="293"/>
        <end position="300"/>
    </location>
</feature>
<feature type="strand" evidence="74">
    <location>
        <begin position="302"/>
        <end position="304"/>
    </location>
</feature>
<feature type="strand" evidence="74">
    <location>
        <begin position="307"/>
        <end position="313"/>
    </location>
</feature>
<feature type="helix" evidence="74">
    <location>
        <begin position="314"/>
        <end position="316"/>
    </location>
</feature>
<feature type="turn" evidence="74">
    <location>
        <begin position="318"/>
        <end position="320"/>
    </location>
</feature>
<feature type="helix" evidence="74">
    <location>
        <begin position="328"/>
        <end position="350"/>
    </location>
</feature>
<feature type="turn" evidence="74">
    <location>
        <begin position="351"/>
        <end position="353"/>
    </location>
</feature>
<feature type="strand" evidence="74">
    <location>
        <begin position="355"/>
        <end position="357"/>
    </location>
</feature>
<feature type="strand" evidence="74">
    <location>
        <begin position="362"/>
        <end position="368"/>
    </location>
</feature>
<feature type="turn" evidence="74">
    <location>
        <begin position="370"/>
        <end position="372"/>
    </location>
</feature>
<feature type="helix" evidence="74">
    <location>
        <begin position="379"/>
        <end position="385"/>
    </location>
</feature>
<feature type="turn" evidence="74">
    <location>
        <begin position="386"/>
        <end position="388"/>
    </location>
</feature>
<feature type="strand" evidence="74">
    <location>
        <begin position="392"/>
        <end position="399"/>
    </location>
</feature>
<feature type="helix" evidence="75">
    <location>
        <begin position="542"/>
        <end position="559"/>
    </location>
</feature>
<feature type="turn" evidence="75">
    <location>
        <begin position="560"/>
        <end position="562"/>
    </location>
</feature>
<sequence>MSTADALDDENTFKILVATDIHLGFMEKDAVRGNDTFVTLDEILRLAQENEVDFILLGGDLFHENKPSRKTLHTCLELLRKYCMGDRPVQFEILSDQSVNFGFSKFPWVNYQDGNLNISIPVFSIHGNHDDPTGADALCALDILSCAGFVNHFGRSMSVEKIDISPVLLQKGSTKIALYGLGSIPDERLYRMFVNKKVTMLRPKEDENSWFNLFVIHQNRSKHGSTNFIPEQFLDDFIDLVIWGHEHECKIAPTKNEQQLFYISQPGSSVVTSLSPGEAVKKHVGLLRIKGRKMNMHKIPLHTVRQFFMEDIVLANHPDIFNPDNPKVTQAIQSFCLEKIEEMLENAERERLGNSHQPEKPLVRLRVDYSGGFEPFSVLRFSQKFVDRVANPKDIIHFFRHREQKEKTGEEINFGKLITKPSEGTTLRVEDLVKQYFQTAEKNVQLSLLTERGMGEAVQEFVDKEEKDAIEELVKYQLEKTQRFLKERHIDALEDKIDEEVRRFRETRQKNTNEEDDEVREAMTRARALRSQSEESASAFSADDLMSIDLAEQMANDSDDSISAATNKGRGRGRGRRGGRGQNSASRGGSQRGRADTGLETSTRSRNSKTAVSASRNMSIIDAFKSTRQQPSRNVTTKNYSEVIEVDESDVEEDIFPTTSKTDQRWSSTSSSKIMSQSQVSKGVDFESSEDDDDDPFMNTSSLRRNRR</sequence>
<evidence type="ECO:0000250" key="1">
    <source>
        <dbReference type="UniProtKB" id="Q61216"/>
    </source>
</evidence>
<evidence type="ECO:0000256" key="2">
    <source>
        <dbReference type="SAM" id="MobiDB-lite"/>
    </source>
</evidence>
<evidence type="ECO:0000269" key="3">
    <source>
    </source>
</evidence>
<evidence type="ECO:0000269" key="4">
    <source>
    </source>
</evidence>
<evidence type="ECO:0000269" key="5">
    <source>
    </source>
</evidence>
<evidence type="ECO:0000269" key="6">
    <source>
    </source>
</evidence>
<evidence type="ECO:0000269" key="7">
    <source>
    </source>
</evidence>
<evidence type="ECO:0000269" key="8">
    <source>
    </source>
</evidence>
<evidence type="ECO:0000269" key="9">
    <source>
    </source>
</evidence>
<evidence type="ECO:0000269" key="10">
    <source>
    </source>
</evidence>
<evidence type="ECO:0000269" key="11">
    <source>
    </source>
</evidence>
<evidence type="ECO:0000269" key="12">
    <source>
    </source>
</evidence>
<evidence type="ECO:0000269" key="13">
    <source>
    </source>
</evidence>
<evidence type="ECO:0000269" key="14">
    <source>
    </source>
</evidence>
<evidence type="ECO:0000269" key="15">
    <source>
    </source>
</evidence>
<evidence type="ECO:0000269" key="16">
    <source>
    </source>
</evidence>
<evidence type="ECO:0000269" key="17">
    <source>
    </source>
</evidence>
<evidence type="ECO:0000269" key="18">
    <source>
    </source>
</evidence>
<evidence type="ECO:0000269" key="19">
    <source>
    </source>
</evidence>
<evidence type="ECO:0000269" key="20">
    <source>
    </source>
</evidence>
<evidence type="ECO:0000269" key="21">
    <source>
    </source>
</evidence>
<evidence type="ECO:0000269" key="22">
    <source>
    </source>
</evidence>
<evidence type="ECO:0000269" key="23">
    <source>
    </source>
</evidence>
<evidence type="ECO:0000269" key="24">
    <source>
    </source>
</evidence>
<evidence type="ECO:0000269" key="25">
    <source>
    </source>
</evidence>
<evidence type="ECO:0000269" key="26">
    <source>
    </source>
</evidence>
<evidence type="ECO:0000269" key="27">
    <source>
    </source>
</evidence>
<evidence type="ECO:0000269" key="28">
    <source>
    </source>
</evidence>
<evidence type="ECO:0000269" key="29">
    <source>
    </source>
</evidence>
<evidence type="ECO:0000269" key="30">
    <source>
    </source>
</evidence>
<evidence type="ECO:0000269" key="31">
    <source>
    </source>
</evidence>
<evidence type="ECO:0000269" key="32">
    <source>
    </source>
</evidence>
<evidence type="ECO:0000269" key="33">
    <source>
    </source>
</evidence>
<evidence type="ECO:0000269" key="34">
    <source>
    </source>
</evidence>
<evidence type="ECO:0000269" key="35">
    <source>
    </source>
</evidence>
<evidence type="ECO:0000269" key="36">
    <source>
    </source>
</evidence>
<evidence type="ECO:0000269" key="37">
    <source>
    </source>
</evidence>
<evidence type="ECO:0000269" key="38">
    <source>
    </source>
</evidence>
<evidence type="ECO:0000269" key="39">
    <source>
    </source>
</evidence>
<evidence type="ECO:0000269" key="40">
    <source>
    </source>
</evidence>
<evidence type="ECO:0000269" key="41">
    <source>
    </source>
</evidence>
<evidence type="ECO:0000269" key="42">
    <source>
    </source>
</evidence>
<evidence type="ECO:0000269" key="43">
    <source>
    </source>
</evidence>
<evidence type="ECO:0000269" key="44">
    <source>
    </source>
</evidence>
<evidence type="ECO:0000269" key="45">
    <source>
    </source>
</evidence>
<evidence type="ECO:0000269" key="46">
    <source>
    </source>
</evidence>
<evidence type="ECO:0000269" key="47">
    <source>
    </source>
</evidence>
<evidence type="ECO:0000269" key="48">
    <source>
    </source>
</evidence>
<evidence type="ECO:0000269" key="49">
    <source>
    </source>
</evidence>
<evidence type="ECO:0000269" key="50">
    <source>
    </source>
</evidence>
<evidence type="ECO:0000269" key="51">
    <source>
    </source>
</evidence>
<evidence type="ECO:0000269" key="52">
    <source>
    </source>
</evidence>
<evidence type="ECO:0000269" key="53">
    <source>
    </source>
</evidence>
<evidence type="ECO:0000269" key="54">
    <source>
    </source>
</evidence>
<evidence type="ECO:0000269" key="55">
    <source>
    </source>
</evidence>
<evidence type="ECO:0000269" key="56">
    <source>
    </source>
</evidence>
<evidence type="ECO:0000269" key="57">
    <source>
    </source>
</evidence>
<evidence type="ECO:0000269" key="58">
    <source ref="7"/>
</evidence>
<evidence type="ECO:0000303" key="59">
    <source>
    </source>
</evidence>
<evidence type="ECO:0000303" key="60">
    <source>
    </source>
</evidence>
<evidence type="ECO:0000305" key="61"/>
<evidence type="ECO:0000312" key="62">
    <source>
        <dbReference type="HGNC" id="HGNC:7230"/>
    </source>
</evidence>
<evidence type="ECO:0007744" key="63">
    <source>
        <dbReference type="PDB" id="3T1I"/>
    </source>
</evidence>
<evidence type="ECO:0007744" key="64">
    <source>
        <dbReference type="PDB" id="8BAH"/>
    </source>
</evidence>
<evidence type="ECO:0007744" key="65">
    <source>
    </source>
</evidence>
<evidence type="ECO:0007744" key="66">
    <source>
    </source>
</evidence>
<evidence type="ECO:0007744" key="67">
    <source>
    </source>
</evidence>
<evidence type="ECO:0007744" key="68">
    <source>
    </source>
</evidence>
<evidence type="ECO:0007744" key="69">
    <source>
    </source>
</evidence>
<evidence type="ECO:0007744" key="70">
    <source>
    </source>
</evidence>
<evidence type="ECO:0007744" key="71">
    <source>
    </source>
</evidence>
<evidence type="ECO:0007744" key="72">
    <source>
    </source>
</evidence>
<evidence type="ECO:0007744" key="73">
    <source>
    </source>
</evidence>
<evidence type="ECO:0007829" key="74">
    <source>
        <dbReference type="PDB" id="3T1I"/>
    </source>
</evidence>
<evidence type="ECO:0007829" key="75">
    <source>
        <dbReference type="PDB" id="8K00"/>
    </source>
</evidence>
<dbReference type="EC" id="3.1.-.-" evidence="33 37 42"/>
<dbReference type="EMBL" id="U37359">
    <property type="protein sequence ID" value="AAC78721.1"/>
    <property type="molecule type" value="mRNA"/>
</dbReference>
<dbReference type="EMBL" id="AF022778">
    <property type="protein sequence ID" value="AAD10197.1"/>
    <property type="molecule type" value="mRNA"/>
</dbReference>
<dbReference type="EMBL" id="AF073362">
    <property type="protein sequence ID" value="AAC36249.1"/>
    <property type="molecule type" value="mRNA"/>
</dbReference>
<dbReference type="EMBL" id="AF303395">
    <property type="protein sequence ID" value="AAK18790.1"/>
    <property type="molecule type" value="Genomic_DNA"/>
</dbReference>
<dbReference type="EMBL" id="AF303379">
    <property type="protein sequence ID" value="AAK18790.1"/>
    <property type="status" value="JOINED"/>
    <property type="molecule type" value="Genomic_DNA"/>
</dbReference>
<dbReference type="EMBL" id="AF303380">
    <property type="protein sequence ID" value="AAK18790.1"/>
    <property type="status" value="JOINED"/>
    <property type="molecule type" value="Genomic_DNA"/>
</dbReference>
<dbReference type="EMBL" id="AF303381">
    <property type="protein sequence ID" value="AAK18790.1"/>
    <property type="status" value="JOINED"/>
    <property type="molecule type" value="Genomic_DNA"/>
</dbReference>
<dbReference type="EMBL" id="AF303382">
    <property type="protein sequence ID" value="AAK18790.1"/>
    <property type="status" value="JOINED"/>
    <property type="molecule type" value="Genomic_DNA"/>
</dbReference>
<dbReference type="EMBL" id="AF303383">
    <property type="protein sequence ID" value="AAK18790.1"/>
    <property type="status" value="JOINED"/>
    <property type="molecule type" value="Genomic_DNA"/>
</dbReference>
<dbReference type="EMBL" id="AF303384">
    <property type="protein sequence ID" value="AAK18790.1"/>
    <property type="status" value="JOINED"/>
    <property type="molecule type" value="Genomic_DNA"/>
</dbReference>
<dbReference type="EMBL" id="AF303385">
    <property type="protein sequence ID" value="AAK18790.1"/>
    <property type="status" value="JOINED"/>
    <property type="molecule type" value="Genomic_DNA"/>
</dbReference>
<dbReference type="EMBL" id="AF303386">
    <property type="protein sequence ID" value="AAK18790.1"/>
    <property type="status" value="JOINED"/>
    <property type="molecule type" value="Genomic_DNA"/>
</dbReference>
<dbReference type="EMBL" id="AF303387">
    <property type="protein sequence ID" value="AAK18790.1"/>
    <property type="status" value="JOINED"/>
    <property type="molecule type" value="Genomic_DNA"/>
</dbReference>
<dbReference type="EMBL" id="AF303388">
    <property type="protein sequence ID" value="AAK18790.1"/>
    <property type="status" value="JOINED"/>
    <property type="molecule type" value="Genomic_DNA"/>
</dbReference>
<dbReference type="EMBL" id="AF303389">
    <property type="protein sequence ID" value="AAK18790.1"/>
    <property type="status" value="JOINED"/>
    <property type="molecule type" value="Genomic_DNA"/>
</dbReference>
<dbReference type="EMBL" id="AF303390">
    <property type="protein sequence ID" value="AAK18790.1"/>
    <property type="status" value="JOINED"/>
    <property type="molecule type" value="Genomic_DNA"/>
</dbReference>
<dbReference type="EMBL" id="AF303391">
    <property type="protein sequence ID" value="AAK18790.1"/>
    <property type="status" value="JOINED"/>
    <property type="molecule type" value="Genomic_DNA"/>
</dbReference>
<dbReference type="EMBL" id="AF303392">
    <property type="protein sequence ID" value="AAK18790.1"/>
    <property type="status" value="JOINED"/>
    <property type="molecule type" value="Genomic_DNA"/>
</dbReference>
<dbReference type="EMBL" id="AF303393">
    <property type="protein sequence ID" value="AAK18790.1"/>
    <property type="status" value="JOINED"/>
    <property type="molecule type" value="Genomic_DNA"/>
</dbReference>
<dbReference type="EMBL" id="AF303394">
    <property type="protein sequence ID" value="AAK18790.1"/>
    <property type="status" value="JOINED"/>
    <property type="molecule type" value="Genomic_DNA"/>
</dbReference>
<dbReference type="EMBL" id="AK095388">
    <property type="protein sequence ID" value="BAG53039.1"/>
    <property type="molecule type" value="mRNA"/>
</dbReference>
<dbReference type="EMBL" id="AY584241">
    <property type="protein sequence ID" value="AAS79320.1"/>
    <property type="molecule type" value="Genomic_DNA"/>
</dbReference>
<dbReference type="EMBL" id="AP000765">
    <property type="status" value="NOT_ANNOTATED_CDS"/>
    <property type="molecule type" value="Genomic_DNA"/>
</dbReference>
<dbReference type="EMBL" id="AP000786">
    <property type="status" value="NOT_ANNOTATED_CDS"/>
    <property type="molecule type" value="Genomic_DNA"/>
</dbReference>
<dbReference type="EMBL" id="KF455448">
    <property type="status" value="NOT_ANNOTATED_CDS"/>
    <property type="molecule type" value="Genomic_DNA"/>
</dbReference>
<dbReference type="EMBL" id="BC063458">
    <property type="protein sequence ID" value="AAH63458.1"/>
    <property type="molecule type" value="mRNA"/>
</dbReference>
<dbReference type="CCDS" id="CCDS8298.1">
    <molecule id="P49959-2"/>
</dbReference>
<dbReference type="CCDS" id="CCDS8299.1">
    <molecule id="P49959-1"/>
</dbReference>
<dbReference type="RefSeq" id="NP_005581.2">
    <molecule id="P49959-2"/>
    <property type="nucleotide sequence ID" value="NM_005590.3"/>
</dbReference>
<dbReference type="RefSeq" id="NP_005582.1">
    <molecule id="P49959-1"/>
    <property type="nucleotide sequence ID" value="NM_005591.4"/>
</dbReference>
<dbReference type="RefSeq" id="XP_011541139.1">
    <molecule id="P49959-1"/>
    <property type="nucleotide sequence ID" value="XM_011542837.3"/>
</dbReference>
<dbReference type="RefSeq" id="XP_016873261.1">
    <molecule id="P49959-1"/>
    <property type="nucleotide sequence ID" value="XM_017017772.2"/>
</dbReference>
<dbReference type="RefSeq" id="XP_047282923.1">
    <molecule id="P49959-2"/>
    <property type="nucleotide sequence ID" value="XM_047426967.1"/>
</dbReference>
<dbReference type="RefSeq" id="XP_054224815.1">
    <molecule id="P49959-1"/>
    <property type="nucleotide sequence ID" value="XM_054368840.1"/>
</dbReference>
<dbReference type="RefSeq" id="XP_054224816.1">
    <molecule id="P49959-1"/>
    <property type="nucleotide sequence ID" value="XM_054368841.1"/>
</dbReference>
<dbReference type="RefSeq" id="XP_054224818.1">
    <molecule id="P49959-2"/>
    <property type="nucleotide sequence ID" value="XM_054368843.1"/>
</dbReference>
<dbReference type="PDB" id="3T1I">
    <property type="method" value="X-ray"/>
    <property type="resolution" value="3.00 A"/>
    <property type="chains" value="A/B/C/D=1-411"/>
</dbReference>
<dbReference type="PDB" id="7ZQY">
    <property type="method" value="EM"/>
    <property type="resolution" value="4.13 A"/>
    <property type="chains" value="A/B=1-708"/>
</dbReference>
<dbReference type="PDB" id="8BAH">
    <property type="method" value="EM"/>
    <property type="resolution" value="4.13 A"/>
    <property type="chains" value="A/B=1-708"/>
</dbReference>
<dbReference type="PDB" id="8K00">
    <property type="method" value="X-ray"/>
    <property type="resolution" value="1.40 A"/>
    <property type="chains" value="B=538-563"/>
</dbReference>
<dbReference type="PDBsum" id="3T1I"/>
<dbReference type="PDBsum" id="7ZQY"/>
<dbReference type="PDBsum" id="8BAH"/>
<dbReference type="PDBsum" id="8K00"/>
<dbReference type="EMDB" id="EMD-15948"/>
<dbReference type="SMR" id="P49959"/>
<dbReference type="BioGRID" id="110501">
    <property type="interactions" value="295"/>
</dbReference>
<dbReference type="ComplexPortal" id="CPX-4442">
    <property type="entry name" value="MRN double-strand break repair complex"/>
</dbReference>
<dbReference type="CORUM" id="P49959"/>
<dbReference type="DIP" id="DIP-33238N"/>
<dbReference type="FunCoup" id="P49959">
    <property type="interactions" value="3483"/>
</dbReference>
<dbReference type="IntAct" id="P49959">
    <property type="interactions" value="96"/>
</dbReference>
<dbReference type="MINT" id="P49959"/>
<dbReference type="STRING" id="9606.ENSP00000325863"/>
<dbReference type="BindingDB" id="P49959"/>
<dbReference type="ChEMBL" id="CHEMBL3308929"/>
<dbReference type="GlyGen" id="P49959">
    <property type="glycosylation" value="3 sites, 1 O-linked glycan (3 sites)"/>
</dbReference>
<dbReference type="iPTMnet" id="P49959"/>
<dbReference type="PhosphoSitePlus" id="P49959"/>
<dbReference type="SwissPalm" id="P49959"/>
<dbReference type="BioMuta" id="MRE11"/>
<dbReference type="DMDM" id="17380137"/>
<dbReference type="CPTAC" id="CPTAC-5911"/>
<dbReference type="jPOST" id="P49959"/>
<dbReference type="MassIVE" id="P49959"/>
<dbReference type="PaxDb" id="9606-ENSP00000325863"/>
<dbReference type="PeptideAtlas" id="P49959"/>
<dbReference type="ProteomicsDB" id="3675"/>
<dbReference type="ProteomicsDB" id="56186">
    <molecule id="P49959-1"/>
</dbReference>
<dbReference type="ProteomicsDB" id="56187">
    <molecule id="P49959-2"/>
</dbReference>
<dbReference type="Pumba" id="P49959"/>
<dbReference type="Antibodypedia" id="706">
    <property type="antibodies" value="696 antibodies from 43 providers"/>
</dbReference>
<dbReference type="CPTC" id="P49959">
    <property type="antibodies" value="2 antibodies"/>
</dbReference>
<dbReference type="DNASU" id="4361"/>
<dbReference type="Ensembl" id="ENST00000323929.8">
    <molecule id="P49959-1"/>
    <property type="protein sequence ID" value="ENSP00000325863.4"/>
    <property type="gene ID" value="ENSG00000020922.13"/>
</dbReference>
<dbReference type="Ensembl" id="ENST00000323977.7">
    <molecule id="P49959-2"/>
    <property type="protein sequence ID" value="ENSP00000326094.3"/>
    <property type="gene ID" value="ENSG00000020922.13"/>
</dbReference>
<dbReference type="Ensembl" id="ENST00000407439.7">
    <molecule id="P49959-3"/>
    <property type="protein sequence ID" value="ENSP00000385614.3"/>
    <property type="gene ID" value="ENSG00000020922.13"/>
</dbReference>
<dbReference type="GeneID" id="4361"/>
<dbReference type="KEGG" id="hsa:4361"/>
<dbReference type="MANE-Select" id="ENST00000323929.8">
    <property type="protein sequence ID" value="ENSP00000325863.4"/>
    <property type="RefSeq nucleotide sequence ID" value="NM_005591.4"/>
    <property type="RefSeq protein sequence ID" value="NP_005582.1"/>
</dbReference>
<dbReference type="UCSC" id="uc001peu.4">
    <molecule id="P49959-1"/>
    <property type="organism name" value="human"/>
</dbReference>
<dbReference type="AGR" id="HGNC:7230"/>
<dbReference type="CTD" id="4361"/>
<dbReference type="DisGeNET" id="4361"/>
<dbReference type="GeneCards" id="MRE11"/>
<dbReference type="HGNC" id="HGNC:7230">
    <property type="gene designation" value="MRE11"/>
</dbReference>
<dbReference type="HPA" id="ENSG00000020922">
    <property type="expression patterns" value="Low tissue specificity"/>
</dbReference>
<dbReference type="MalaCards" id="MRE11"/>
<dbReference type="MIM" id="600814">
    <property type="type" value="gene"/>
</dbReference>
<dbReference type="MIM" id="604391">
    <property type="type" value="phenotype"/>
</dbReference>
<dbReference type="neXtProt" id="NX_P49959"/>
<dbReference type="OpenTargets" id="ENSG00000020922"/>
<dbReference type="Orphanet" id="251347">
    <property type="disease" value="Ataxia-telangiectasia-like disorder"/>
</dbReference>
<dbReference type="Orphanet" id="145">
    <property type="disease" value="Hereditary breast and/or ovarian cancer syndrome"/>
</dbReference>
<dbReference type="Orphanet" id="240760">
    <property type="disease" value="Nijmegen breakage syndrome-like disorder"/>
</dbReference>
<dbReference type="PharmGKB" id="PA30934"/>
<dbReference type="VEuPathDB" id="HostDB:ENSG00000020922"/>
<dbReference type="eggNOG" id="KOG2310">
    <property type="taxonomic scope" value="Eukaryota"/>
</dbReference>
<dbReference type="GeneTree" id="ENSGT00390000017288"/>
<dbReference type="HOGENOM" id="CLU_009535_3_1_1"/>
<dbReference type="InParanoid" id="P49959"/>
<dbReference type="OMA" id="ESCMFNA"/>
<dbReference type="OrthoDB" id="30417at2759"/>
<dbReference type="PAN-GO" id="P49959">
    <property type="GO annotations" value="10 GO annotations based on evolutionary models"/>
</dbReference>
<dbReference type="PhylomeDB" id="P49959"/>
<dbReference type="TreeFam" id="TF101105"/>
<dbReference type="PathwayCommons" id="P49959"/>
<dbReference type="Reactome" id="R-HSA-1834949">
    <property type="pathway name" value="Cytosolic sensors of pathogen-associated DNA"/>
</dbReference>
<dbReference type="Reactome" id="R-HSA-2559586">
    <property type="pathway name" value="DNA Damage/Telomere Stress Induced Senescence"/>
</dbReference>
<dbReference type="Reactome" id="R-HSA-3270619">
    <property type="pathway name" value="IRF3-mediated induction of type I IFN"/>
</dbReference>
<dbReference type="Reactome" id="R-HSA-5685938">
    <property type="pathway name" value="HDR through Single Strand Annealing (SSA)"/>
</dbReference>
<dbReference type="Reactome" id="R-HSA-5685939">
    <property type="pathway name" value="HDR through MMEJ (alt-NHEJ)"/>
</dbReference>
<dbReference type="Reactome" id="R-HSA-5685942">
    <property type="pathway name" value="HDR through Homologous Recombination (HRR)"/>
</dbReference>
<dbReference type="Reactome" id="R-HSA-5693548">
    <property type="pathway name" value="Sensing of DNA Double Strand Breaks"/>
</dbReference>
<dbReference type="Reactome" id="R-HSA-5693554">
    <property type="pathway name" value="Resolution of D-loop Structures through Synthesis-Dependent Strand Annealing (SDSA)"/>
</dbReference>
<dbReference type="Reactome" id="R-HSA-5693565">
    <property type="pathway name" value="Recruitment and ATM-mediated phosphorylation of repair and signaling proteins at DNA double strand breaks"/>
</dbReference>
<dbReference type="Reactome" id="R-HSA-5693568">
    <property type="pathway name" value="Resolution of D-loop Structures through Holliday Junction Intermediates"/>
</dbReference>
<dbReference type="Reactome" id="R-HSA-5693571">
    <property type="pathway name" value="Nonhomologous End-Joining (NHEJ)"/>
</dbReference>
<dbReference type="Reactome" id="R-HSA-5693579">
    <property type="pathway name" value="Homologous DNA Pairing and Strand Exchange"/>
</dbReference>
<dbReference type="Reactome" id="R-HSA-5693607">
    <property type="pathway name" value="Processing of DNA double-strand break ends"/>
</dbReference>
<dbReference type="Reactome" id="R-HSA-5693616">
    <property type="pathway name" value="Presynaptic phase of homologous DNA pairing and strand exchange"/>
</dbReference>
<dbReference type="Reactome" id="R-HSA-6804756">
    <property type="pathway name" value="Regulation of TP53 Activity through Phosphorylation"/>
</dbReference>
<dbReference type="Reactome" id="R-HSA-69473">
    <property type="pathway name" value="G2/M DNA damage checkpoint"/>
</dbReference>
<dbReference type="Reactome" id="R-HSA-912446">
    <property type="pathway name" value="Meiotic recombination"/>
</dbReference>
<dbReference type="Reactome" id="R-HSA-9701192">
    <property type="pathway name" value="Defective homologous recombination repair (HRR) due to BRCA1 loss of function"/>
</dbReference>
<dbReference type="Reactome" id="R-HSA-9704331">
    <property type="pathway name" value="Defective HDR through Homologous Recombination Repair (HRR) due to PALB2 loss of BRCA1 binding function"/>
</dbReference>
<dbReference type="Reactome" id="R-HSA-9704646">
    <property type="pathway name" value="Defective HDR through Homologous Recombination Repair (HRR) due to PALB2 loss of BRCA2/RAD51/RAD51C binding function"/>
</dbReference>
<dbReference type="Reactome" id="R-HSA-9709570">
    <property type="pathway name" value="Impaired BRCA2 binding to RAD51"/>
</dbReference>
<dbReference type="Reactome" id="R-HSA-9709603">
    <property type="pathway name" value="Impaired BRCA2 binding to PALB2"/>
</dbReference>
<dbReference type="SignaLink" id="P49959"/>
<dbReference type="SIGNOR" id="P49959"/>
<dbReference type="BioGRID-ORCS" id="4361">
    <property type="hits" value="339 hits in 1168 CRISPR screens"/>
</dbReference>
<dbReference type="CD-CODE" id="91857CE7">
    <property type="entry name" value="Nucleolus"/>
</dbReference>
<dbReference type="ChiTaRS" id="MRE11A">
    <property type="organism name" value="human"/>
</dbReference>
<dbReference type="EvolutionaryTrace" id="P49959"/>
<dbReference type="GeneWiki" id="MRE11A"/>
<dbReference type="GenomeRNAi" id="4361"/>
<dbReference type="Pharos" id="P49959">
    <property type="development level" value="Tbio"/>
</dbReference>
<dbReference type="PRO" id="PR:P49959"/>
<dbReference type="Proteomes" id="UP000005640">
    <property type="component" value="Chromosome 11"/>
</dbReference>
<dbReference type="RNAct" id="P49959">
    <property type="molecule type" value="protein"/>
</dbReference>
<dbReference type="Bgee" id="ENSG00000020922">
    <property type="expression patterns" value="Expressed in calcaneal tendon and 176 other cell types or tissues"/>
</dbReference>
<dbReference type="ExpressionAtlas" id="P49959">
    <property type="expression patterns" value="baseline and differential"/>
</dbReference>
<dbReference type="GO" id="GO:0070533">
    <property type="term" value="C:BRCA1-C complex"/>
    <property type="evidence" value="ECO:0000353"/>
    <property type="project" value="ComplexPortal"/>
</dbReference>
<dbReference type="GO" id="GO:0098687">
    <property type="term" value="C:chromosomal region"/>
    <property type="evidence" value="ECO:0000303"/>
    <property type="project" value="ComplexPortal"/>
</dbReference>
<dbReference type="GO" id="GO:0000781">
    <property type="term" value="C:chromosome, telomeric region"/>
    <property type="evidence" value="ECO:0000314"/>
    <property type="project" value="BHF-UCL"/>
</dbReference>
<dbReference type="GO" id="GO:0005737">
    <property type="term" value="C:cytoplasm"/>
    <property type="evidence" value="ECO:0000314"/>
    <property type="project" value="BHF-UCL"/>
</dbReference>
<dbReference type="GO" id="GO:0005829">
    <property type="term" value="C:cytosol"/>
    <property type="evidence" value="ECO:0000304"/>
    <property type="project" value="Reactome"/>
</dbReference>
<dbReference type="GO" id="GO:0030870">
    <property type="term" value="C:Mre11 complex"/>
    <property type="evidence" value="ECO:0000314"/>
    <property type="project" value="UniProtKB"/>
</dbReference>
<dbReference type="GO" id="GO:0005654">
    <property type="term" value="C:nucleoplasm"/>
    <property type="evidence" value="ECO:0000314"/>
    <property type="project" value="HPA"/>
</dbReference>
<dbReference type="GO" id="GO:0005634">
    <property type="term" value="C:nucleus"/>
    <property type="evidence" value="ECO:0000304"/>
    <property type="project" value="ProtInc"/>
</dbReference>
<dbReference type="GO" id="GO:0016605">
    <property type="term" value="C:PML body"/>
    <property type="evidence" value="ECO:0000314"/>
    <property type="project" value="BHF-UCL"/>
</dbReference>
<dbReference type="GO" id="GO:0005657">
    <property type="term" value="C:replication fork"/>
    <property type="evidence" value="ECO:0000314"/>
    <property type="project" value="UniProtKB"/>
</dbReference>
<dbReference type="GO" id="GO:0035861">
    <property type="term" value="C:site of double-strand break"/>
    <property type="evidence" value="ECO:0000314"/>
    <property type="project" value="UniProtKB"/>
</dbReference>
<dbReference type="GO" id="GO:0008408">
    <property type="term" value="F:3'-5' exonuclease activity"/>
    <property type="evidence" value="ECO:0000314"/>
    <property type="project" value="UniProtKB"/>
</dbReference>
<dbReference type="GO" id="GO:0008296">
    <property type="term" value="F:3'-5'-DNA exonuclease activity"/>
    <property type="evidence" value="ECO:0000314"/>
    <property type="project" value="UniProt"/>
</dbReference>
<dbReference type="GO" id="GO:0045296">
    <property type="term" value="F:cadherin binding"/>
    <property type="evidence" value="ECO:0007005"/>
    <property type="project" value="BHF-UCL"/>
</dbReference>
<dbReference type="GO" id="GO:0004520">
    <property type="term" value="F:DNA endonuclease activity"/>
    <property type="evidence" value="ECO:0000314"/>
    <property type="project" value="UniProtKB"/>
</dbReference>
<dbReference type="GO" id="GO:0003690">
    <property type="term" value="F:double-stranded DNA binding"/>
    <property type="evidence" value="ECO:0000304"/>
    <property type="project" value="ProtInc"/>
</dbReference>
<dbReference type="GO" id="GO:0042802">
    <property type="term" value="F:identical protein binding"/>
    <property type="evidence" value="ECO:0000353"/>
    <property type="project" value="IntAct"/>
</dbReference>
<dbReference type="GO" id="GO:0030145">
    <property type="term" value="F:manganese ion binding"/>
    <property type="evidence" value="ECO:0007669"/>
    <property type="project" value="InterPro"/>
</dbReference>
<dbReference type="GO" id="GO:0004518">
    <property type="term" value="F:nuclease activity"/>
    <property type="evidence" value="ECO:0000304"/>
    <property type="project" value="BHF-UCL"/>
</dbReference>
<dbReference type="GO" id="GO:0000014">
    <property type="term" value="F:single-stranded DNA endodeoxyribonuclease activity"/>
    <property type="evidence" value="ECO:0000314"/>
    <property type="project" value="CACAO"/>
</dbReference>
<dbReference type="GO" id="GO:0008283">
    <property type="term" value="P:cell population proliferation"/>
    <property type="evidence" value="ECO:0007669"/>
    <property type="project" value="Ensembl"/>
</dbReference>
<dbReference type="GO" id="GO:0006974">
    <property type="term" value="P:DNA damage response"/>
    <property type="evidence" value="ECO:0000314"/>
    <property type="project" value="UniProtKB"/>
</dbReference>
<dbReference type="GO" id="GO:0000729">
    <property type="term" value="P:DNA double-strand break processing"/>
    <property type="evidence" value="ECO:0000315"/>
    <property type="project" value="UniProtKB"/>
</dbReference>
<dbReference type="GO" id="GO:0006310">
    <property type="term" value="P:DNA recombination"/>
    <property type="evidence" value="ECO:0000304"/>
    <property type="project" value="ProtInc"/>
</dbReference>
<dbReference type="GO" id="GO:0006281">
    <property type="term" value="P:DNA repair"/>
    <property type="evidence" value="ECO:0000304"/>
    <property type="project" value="ProtInc"/>
</dbReference>
<dbReference type="GO" id="GO:0110025">
    <property type="term" value="P:DNA strand resection involved in replication fork processing"/>
    <property type="evidence" value="ECO:0000314"/>
    <property type="project" value="UniProtKB"/>
</dbReference>
<dbReference type="GO" id="GO:0006302">
    <property type="term" value="P:double-strand break repair"/>
    <property type="evidence" value="ECO:0000314"/>
    <property type="project" value="UniProtKB"/>
</dbReference>
<dbReference type="GO" id="GO:0000724">
    <property type="term" value="P:double-strand break repair via homologous recombination"/>
    <property type="evidence" value="ECO:0000314"/>
    <property type="project" value="UniProtKB"/>
</dbReference>
<dbReference type="GO" id="GO:0006303">
    <property type="term" value="P:double-strand break repair via nonhomologous end joining"/>
    <property type="evidence" value="ECO:0000314"/>
    <property type="project" value="CACAO"/>
</dbReference>
<dbReference type="GO" id="GO:0007129">
    <property type="term" value="P:homologous chromosome pairing at meiosis"/>
    <property type="evidence" value="ECO:0007669"/>
    <property type="project" value="Ensembl"/>
</dbReference>
<dbReference type="GO" id="GO:0035825">
    <property type="term" value="P:homologous recombination"/>
    <property type="evidence" value="ECO:0000303"/>
    <property type="project" value="ComplexPortal"/>
</dbReference>
<dbReference type="GO" id="GO:0042138">
    <property type="term" value="P:meiotic DNA double-strand break formation"/>
    <property type="evidence" value="ECO:0000318"/>
    <property type="project" value="GO_Central"/>
</dbReference>
<dbReference type="GO" id="GO:0097552">
    <property type="term" value="P:mitochondrial double-strand break repair via homologous recombination"/>
    <property type="evidence" value="ECO:0000318"/>
    <property type="project" value="GO_Central"/>
</dbReference>
<dbReference type="GO" id="GO:0007095">
    <property type="term" value="P:mitotic G2 DNA damage checkpoint signaling"/>
    <property type="evidence" value="ECO:0000318"/>
    <property type="project" value="GO_Central"/>
</dbReference>
<dbReference type="GO" id="GO:0044818">
    <property type="term" value="P:mitotic G2/M transition checkpoint"/>
    <property type="evidence" value="ECO:0000303"/>
    <property type="project" value="ComplexPortal"/>
</dbReference>
<dbReference type="GO" id="GO:0031573">
    <property type="term" value="P:mitotic intra-S DNA damage checkpoint signaling"/>
    <property type="evidence" value="ECO:0000318"/>
    <property type="project" value="GO_Central"/>
</dbReference>
<dbReference type="GO" id="GO:0043066">
    <property type="term" value="P:negative regulation of apoptotic process"/>
    <property type="evidence" value="ECO:0000315"/>
    <property type="project" value="BHF-UCL"/>
</dbReference>
<dbReference type="GO" id="GO:2001033">
    <property type="term" value="P:negative regulation of double-strand break repair via nonhomologous end joining"/>
    <property type="evidence" value="ECO:0000314"/>
    <property type="project" value="UniProtKB"/>
</dbReference>
<dbReference type="GO" id="GO:2000781">
    <property type="term" value="P:positive regulation of double-strand break repair"/>
    <property type="evidence" value="ECO:0000315"/>
    <property type="project" value="BHF-UCL"/>
</dbReference>
<dbReference type="GO" id="GO:0032206">
    <property type="term" value="P:positive regulation of telomere maintenance"/>
    <property type="evidence" value="ECO:0000315"/>
    <property type="project" value="BHF-UCL"/>
</dbReference>
<dbReference type="GO" id="GO:0062176">
    <property type="term" value="P:R-loop processing"/>
    <property type="evidence" value="ECO:0000314"/>
    <property type="project" value="UniProtKB"/>
</dbReference>
<dbReference type="GO" id="GO:0007131">
    <property type="term" value="P:reciprocal meiotic recombination"/>
    <property type="evidence" value="ECO:0000304"/>
    <property type="project" value="ProtInc"/>
</dbReference>
<dbReference type="GO" id="GO:0000019">
    <property type="term" value="P:regulation of mitotic recombination"/>
    <property type="evidence" value="ECO:0000304"/>
    <property type="project" value="ProtInc"/>
</dbReference>
<dbReference type="GO" id="GO:0007062">
    <property type="term" value="P:sister chromatid cohesion"/>
    <property type="evidence" value="ECO:0000315"/>
    <property type="project" value="BHF-UCL"/>
</dbReference>
<dbReference type="GO" id="GO:0000723">
    <property type="term" value="P:telomere maintenance"/>
    <property type="evidence" value="ECO:0000318"/>
    <property type="project" value="GO_Central"/>
</dbReference>
<dbReference type="GO" id="GO:0007004">
    <property type="term" value="P:telomere maintenance via telomerase"/>
    <property type="evidence" value="ECO:0000304"/>
    <property type="project" value="ProtInc"/>
</dbReference>
<dbReference type="GO" id="GO:0031860">
    <property type="term" value="P:telomeric 3' overhang formation"/>
    <property type="evidence" value="ECO:0000315"/>
    <property type="project" value="BHF-UCL"/>
</dbReference>
<dbReference type="CDD" id="cd00840">
    <property type="entry name" value="MPP_Mre11_N"/>
    <property type="match status" value="1"/>
</dbReference>
<dbReference type="FunFam" id="3.30.110.110:FF:000001">
    <property type="entry name" value="Double-strand break repair protein"/>
    <property type="match status" value="1"/>
</dbReference>
<dbReference type="FunFam" id="3.60.21.10:FF:000011">
    <property type="entry name" value="Double-strand break repair protein"/>
    <property type="match status" value="1"/>
</dbReference>
<dbReference type="Gene3D" id="3.60.21.10">
    <property type="match status" value="1"/>
</dbReference>
<dbReference type="Gene3D" id="3.30.110.110">
    <property type="entry name" value="Mre11, capping domain"/>
    <property type="match status" value="1"/>
</dbReference>
<dbReference type="InterPro" id="IPR004843">
    <property type="entry name" value="Calcineurin-like_PHP_ApaH"/>
</dbReference>
<dbReference type="InterPro" id="IPR029052">
    <property type="entry name" value="Metallo-depent_PP-like"/>
</dbReference>
<dbReference type="InterPro" id="IPR003701">
    <property type="entry name" value="Mre11"/>
</dbReference>
<dbReference type="InterPro" id="IPR038487">
    <property type="entry name" value="Mre11_capping_dom"/>
</dbReference>
<dbReference type="InterPro" id="IPR007281">
    <property type="entry name" value="Mre11_DNA-bd"/>
</dbReference>
<dbReference type="InterPro" id="IPR041796">
    <property type="entry name" value="Mre11_N"/>
</dbReference>
<dbReference type="NCBIfam" id="TIGR00583">
    <property type="entry name" value="mre11"/>
    <property type="match status" value="1"/>
</dbReference>
<dbReference type="PANTHER" id="PTHR10139">
    <property type="entry name" value="DOUBLE-STRAND BREAK REPAIR PROTEIN MRE11"/>
    <property type="match status" value="1"/>
</dbReference>
<dbReference type="PANTHER" id="PTHR10139:SF4">
    <property type="entry name" value="DOUBLE-STRAND BREAK REPAIR PROTEIN MRE11"/>
    <property type="match status" value="1"/>
</dbReference>
<dbReference type="Pfam" id="PF00149">
    <property type="entry name" value="Metallophos"/>
    <property type="match status" value="1"/>
</dbReference>
<dbReference type="Pfam" id="PF04152">
    <property type="entry name" value="Mre11_DNA_bind"/>
    <property type="match status" value="1"/>
</dbReference>
<dbReference type="PIRSF" id="PIRSF000882">
    <property type="entry name" value="DSB_repair_MRE11"/>
    <property type="match status" value="1"/>
</dbReference>
<dbReference type="SMART" id="SM01347">
    <property type="entry name" value="Mre11_DNA_bind"/>
    <property type="match status" value="1"/>
</dbReference>
<dbReference type="SUPFAM" id="SSF56300">
    <property type="entry name" value="Metallo-dependent phosphatases"/>
    <property type="match status" value="1"/>
</dbReference>
<accession>P49959</accession>
<accession>B3KTC7</accession>
<accession>O43475</accession>
<comment type="function">
    <text evidence="1 6 9 11 13 19 22 27 29 30 33 36 37 40 42 43 44 46 47 48 50 51 53 54 55 56 57">Core component of the MRN complex, which plays a central role in double-strand break (DSB) repair, DNA recombination, maintenance of telomere integrity and meiosis (PubMed:11741547, PubMed:14657032, PubMed:22078559, PubMed:23080121, PubMed:24316220, PubMed:26240375, PubMed:27889449, PubMed:28867292, PubMed:29670289, PubMed:30464262, PubMed:30612738, PubMed:31353207, PubMed:37696958, PubMed:38128537, PubMed:9590181, PubMed:9651580, PubMed:9705271). The MRN complex is involved in the repair of DNA double-strand breaks (DSBs) via homologous recombination (HR), an error-free mechanism which primarily occurs during S and G2 phases (PubMed:24316220, PubMed:28867292, PubMed:31353207, PubMed:38128537). The complex (1) mediates the end resection of damaged DNA, which generates proper single-stranded DNA, a key initial steps in HR, and is (2) required for the recruitment of other repair factors and efficient activation of ATM and ATR upon DNA damage (PubMed:24316220, PubMed:27889449, PubMed:28867292, PubMed:36050397, PubMed:38128537). Within the MRN complex, MRE11 possesses both single-strand endonuclease activity and double-strand-specific 3'-5' exonuclease activity (PubMed:11741547, PubMed:22078559, PubMed:24316220, PubMed:26240375, PubMed:27889449, PubMed:29670289, PubMed:31353207, PubMed:36563124, PubMed:9590181, PubMed:9651580, PubMed:9705271). After DSBs, MRE11 is loaded onto DSBs sites and cleaves DNA by cooperating with RBBP8/CtIP to initiate end resection (PubMed:27814491, PubMed:27889449, PubMed:30787182). MRE11 first endonucleolytically cleaves the 5' strand at DNA DSB ends to prevent non-homologous end joining (NHEJ) and licence HR (PubMed:24316220). It then generates a single-stranded DNA gap via 3' to 5' exonucleolytic degradation to create entry sites for EXO1- and DNA2-mediated 5' to 3' long-range resection, which is required for single-strand invasion and recombination (PubMed:24316220, PubMed:28867292). RBBP8/CtIP specifically promotes the endonuclease activity of MRE11 to clear protein-DNA adducts and generate clean double-strand break ends (PubMed:27814491, PubMed:27889449, PubMed:30787182). MRE11 endonuclease activity is also enhanced by AGER/RAGE (By similarity). The MRN complex is also required for DNA damage signaling via activation of the ATM and ATR kinases: the nuclease activity of MRE11 is not required to activate ATM and ATR (PubMed:14657032, PubMed:15064416, PubMed:15790808, PubMed:16622404). The MRN complex is also required for the processing of R-loops (PubMed:31537797). The MRN complex is involved in the activation of the cGAS-STING pathway induced by DNA damage during tumorigenesis: the MRN complex acts by displacing CGAS from nucleosome sequestration, thereby activating it (By similarity). In telomeres the MRN complex may modulate t-loop formation (PubMed:10888888).</text>
</comment>
<comment type="function">
    <text evidence="61">MRE11 contains two DNA-binding domains (DBDs), enabling it to bind both single-stranded DNA (ssDNA) and double-stranded DNA (dsDNA).</text>
</comment>
<comment type="cofactor">
    <cofactor evidence="27 52">
        <name>Mn(2+)</name>
        <dbReference type="ChEBI" id="CHEBI:29035"/>
    </cofactor>
</comment>
<comment type="activity regulation">
    <text evidence="30 36 37 42 43 46 47 53">Interaction with SAMHD1 stimulates the double-strand-specific 3'-5' exonuclease activity (PubMed:29670289). RBBP8/CtIP specifically promotes the endonuclease activity to clear protein-DNA adducts and generate clean double-strand break ends (PubMed:27814491, PubMed:27889449, PubMed:30787182). DYNLL1-binding inhibits the activity of MRE11 (PubMed:30464262, PubMed:37696958). MRE11 activity is inhibited by C1QBP: in absence of DNA damage, C1QBP interacts with unphosphorylated MRE11, preventing formation and activity of the MRN complex (PubMed:31353207). The mirin-derivative PFM39, specifically inhibits the 3'-5' exonuclease activity (PubMed:24316220). The N-alkylated mirin-derivatives PFM03 and PFM01 specifically inhibit the endonuclease activity (PubMed:24316220).</text>
</comment>
<comment type="subunit">
    <text evidence="1 4 5 6 15 17 20 24 32 34 35 39 40 41 42 43 44 47 49 52 53 55 56 57">Component of the MRN complex composed of two heterodimers RAD50 and MRE11 associated with a single NBN (PubMed:10839544, PubMed:26215093, PubMed:28867292, PubMed:9590181, PubMed:9651580, PubMed:9705271). The MRN complexes dimerize on DNA to form joined MRN-MRN oligomers required for DNA double-strand break repair (PubMed:36577401). As part of the MRN complex, interacts with MCM9; the interaction recruits the complex to DNA repair sites (PubMed:26215093). Component of the BASC complex, at least composed of BRCA1, MSH2, MSH6, MLH1, ATM, BLM, RAD50, MRE11 and NBN (PubMed:10783165). Found in a complex with TERF2 (PubMed:10888888). Interacts with DCLRE1C/Artemis and DCLRE1B/Apollo (PubMed:15456891, PubMed:15723659, PubMed:18469862). Interacts with ATF2 (PubMed:15916964). Interacts with EXD2 (PubMed:26807646). Interacts with MRNIP (PubMed:27568553). Interacts with SAMHD1; leading to stimulate 3'-5' exonuclease activity (PubMed:28834754, PubMed:29670289). Interacts (when ubiquitinated) with UBQLN4 (via its UBA domain) (PubMed:30612738). Interacts with CYREN (via XLF motif) (By similarity). Interacts with GFI1; promoting methylation by PRMT1 (PubMed:29651020). Interacts with DYNLL1; inhibiting the activity of MRE11 (PubMed:30464262, PubMed:37696958). Interacts with C1QBP and RAD50; interaction takes place in absence of DNA damage to form the MRC (MRE11-RAD50-C1QBP) complex that inhibits the activity of MRE11 (PubMed:31353207). Interacts with AGER/RAGE (PubMed:33918759). AGER is recruited to DNA double-strand break sites where it enhances MRE11 endonuclease activity to promote DNA repair (By similarity).</text>
</comment>
<comment type="subunit">
    <text evidence="26">(Microbial infection) Interacts with herpes simplex virus 1 protein UL12 (PubMed:20943970).</text>
</comment>
<comment type="interaction">
    <interactant intactId="EBI-396513">
        <id>P49959</id>
    </interactant>
    <interactant intactId="EBI-359343">
        <id>Q9BXW9</id>
        <label>FANCD2</label>
    </interactant>
    <organismsDiffer>false</organismsDiffer>
    <experiments>6</experiments>
</comment>
<comment type="interaction">
    <interactant intactId="EBI-396513">
        <id>P49959</id>
    </interactant>
    <interactant intactId="EBI-494830">
        <id>P16104</id>
        <label>H2AX</label>
    </interactant>
    <organismsDiffer>false</organismsDiffer>
    <experiments>7</experiments>
</comment>
<comment type="interaction">
    <interactant intactId="EBI-396513">
        <id>P49959</id>
    </interactant>
    <interactant intactId="EBI-466029">
        <id>P42858</id>
        <label>HTT</label>
    </interactant>
    <organismsDiffer>false</organismsDiffer>
    <experiments>5</experiments>
</comment>
<comment type="interaction">
    <interactant intactId="EBI-396513">
        <id>P49959</id>
    </interactant>
    <interactant intactId="EBI-396513">
        <id>P49959</id>
        <label>MRE11</label>
    </interactant>
    <organismsDiffer>false</organismsDiffer>
    <experiments>3</experiments>
</comment>
<comment type="interaction">
    <interactant intactId="EBI-396513">
        <id>P49959</id>
    </interactant>
    <interactant intactId="EBI-494844">
        <id>O60934</id>
        <label>NBN</label>
    </interactant>
    <organismsDiffer>false</organismsDiffer>
    <experiments>5</experiments>
</comment>
<comment type="interaction">
    <interactant intactId="EBI-396513">
        <id>P49959</id>
    </interactant>
    <interactant intactId="EBI-968231">
        <id>O75943</id>
        <label>RAD17</label>
    </interactant>
    <organismsDiffer>false</organismsDiffer>
    <experiments>2</experiments>
</comment>
<comment type="interaction">
    <interactant intactId="EBI-396513">
        <id>P49959</id>
    </interactant>
    <interactant intactId="EBI-745715">
        <id>Q99708</id>
        <label>RBBP8</label>
    </interactant>
    <organismsDiffer>false</organismsDiffer>
    <experiments>3</experiments>
</comment>
<comment type="interaction">
    <interactant intactId="EBI-396513">
        <id>P49959</id>
    </interactant>
    <interactant intactId="EBI-1927377">
        <id>P03243-1</id>
    </interactant>
    <organismsDiffer>true</organismsDiffer>
    <experiments>2</experiments>
</comment>
<comment type="subcellular location">
    <subcellularLocation>
        <location evidence="4 32">Nucleus</location>
    </subcellularLocation>
    <subcellularLocation>
        <location evidence="20 32 33 38 44">Chromosome</location>
    </subcellularLocation>
    <subcellularLocation>
        <location evidence="6 50">Chromosome</location>
        <location evidence="6 50">Telomere</location>
    </subcellularLocation>
    <text evidence="20 33 38 44 50">Localizes to DNA double-strand breaks (DSBs).</text>
</comment>
<comment type="alternative products">
    <event type="alternative splicing"/>
    <isoform>
        <id>P49959-1</id>
        <name>1</name>
        <sequence type="displayed"/>
    </isoform>
    <isoform>
        <id>P49959-2</id>
        <name>2</name>
        <sequence type="described" ref="VSP_003262"/>
    </isoform>
    <isoform>
        <id>P49959-3</id>
        <name>3</name>
        <sequence type="described" ref="VSP_057350"/>
    </isoform>
</comment>
<comment type="PTM">
    <text evidence="21 33 38 47">Phosphorylated by ATM at Ser-676 and Ser-678 in response to DNA damage, promoting MRE11 activity: phosphorylation activates MRE11 by preventing the interaction between MRE11 and the C1QBP inhibitor (PubMed:16601701, PubMed:26240375, PubMed:31353207). Phosphorylation at Ser-649 by PLK1 primes for phosphorylation at Ser-688 by CK2, inhibiting recruitment of the MRN complex to DNA damage sites (PubMed:28512243).</text>
</comment>
<comment type="PTM">
    <text evidence="18 41">Asymmetric dimethylation by PRMT1 promotes MRE11 exonuclease activity.</text>
</comment>
<comment type="PTM">
    <text evidence="54">Lactylation at Lys-673 by CREBBP/CBP in response to DNA damage promotes DNA binding and MRE11 activity.</text>
</comment>
<comment type="PTM">
    <text evidence="54">Acetylated on lysine residues by KAT2A /GCN5.</text>
</comment>
<comment type="PTM">
    <text evidence="44 51">Ubiquitinated following DNA damage (PubMed:30612738). Ubiquitination triggers interaction with UBQLN4, leading to MRE11 removal from chromatin and degradation by the proteasome (PubMed:30612738). Ubiquitinated at Lys-339 and Lys-480 by RNF126 via 'Lys-27'- and 'Lys-29'-linked polyubiquitin chains, promoting the exonuclease activity of MRE11 (PubMed:36563124).</text>
</comment>
<comment type="PTM">
    <text evidence="50">SUMOylated by PIAS1, stabilizing MRE11 on chromatin during end resection (PubMed:36050397). DeSUMOylated by SENP3 following removal from DNA double-strand breaks (DSBs) (PubMed:36050397).</text>
</comment>
<comment type="PTM">
    <text evidence="45">Ufmylation at Lys-282 promotes MRE11 activity and is required for activation of the ATM and ATR kinases by the MRN complex.</text>
</comment>
<comment type="PTM">
    <text evidence="10 11">(Microbial infection) Following infection by adenovirus E4, ubiquitinated and degraded by a SCF-like E3 ubiquitin ligase complex containing viral proteins E1B-55K and E4-ORF6.</text>
</comment>
<comment type="disease" evidence="3 8 14 16 25 29 31">
    <disease id="DI-00140">
        <name>Ataxia-telangiectasia-like disorder 1</name>
        <acronym>ATLD1</acronym>
        <description>A rare disorder characterized by progressive cerebellar ataxia, dysarthria, abnormal eye movements, and absence of telangiectasia. ATLD patients show normal levels of total IgG, IgA and IgM, although there may be reduced levels of specific functional antibodies. At the cellular level, ATLD exhibits hypersensitivity to ionizing radiation and radioresistant DNA synthesis.</description>
        <dbReference type="MIM" id="604391"/>
    </disease>
    <text>The disease is caused by variants affecting the gene represented in this entry.</text>
</comment>
<comment type="disease">
    <text evidence="28">Defects in MRE11 can be a cause of nephronophthisis-related ciliopathies (NPHP-RC), a group of recessive diseases that affect kidney, retina and brain. A homozygous truncating mutation MRE11 has been found in patients with cerebellar vermis hypoplasia, ataxia and dysarthria.</text>
</comment>
<comment type="similarity">
    <text evidence="61">Belongs to the MRE11/RAD32 family.</text>
</comment>
<comment type="online information" name="Atlas of Genetics and Cytogenetics in Oncology and Haematology">
    <link uri="https://atlasgeneticsoncology.org/gene/247/MRE11"/>
</comment>
<comment type="online information" name="MRE11base">
    <link uri="https://databases.lovd.nl/shared/genes/MRE11A"/>
    <text>MRE11A mutation db</text>
</comment>
<gene>
    <name evidence="60 62" type="primary">MRE11</name>
    <name type="synonym">HNGS1</name>
    <name type="synonym">MRE11A</name>
</gene>
<proteinExistence type="evidence at protein level"/>
<organism>
    <name type="scientific">Homo sapiens</name>
    <name type="common">Human</name>
    <dbReference type="NCBI Taxonomy" id="9606"/>
    <lineage>
        <taxon>Eukaryota</taxon>
        <taxon>Metazoa</taxon>
        <taxon>Chordata</taxon>
        <taxon>Craniata</taxon>
        <taxon>Vertebrata</taxon>
        <taxon>Euteleostomi</taxon>
        <taxon>Mammalia</taxon>
        <taxon>Eutheria</taxon>
        <taxon>Euarchontoglires</taxon>
        <taxon>Primates</taxon>
        <taxon>Haplorrhini</taxon>
        <taxon>Catarrhini</taxon>
        <taxon>Hominidae</taxon>
        <taxon>Homo</taxon>
    </lineage>
</organism>